<name>ENPP1_MOUSE</name>
<comment type="function">
    <text evidence="1 7 8 9 11 15 16 18 19 21 22 23 24 25 28 30 31">Nucleotide pyrophosphatase that generates diphosphate (PPi) and functions in bone mineralization and soft tissue calcification by regulating pyrophosphate levels (PubMed:10352096, PubMed:11004006, PubMed:12082181, PubMed:22510396, PubMed:25260930, PubMed:9662402). PPi inhibits bone mineralization and soft tissue calcification by binding to nascent hydroxyapatite crystals, thereby preventing further growth of these crystals (PubMed:10352096, PubMed:11004006, PubMed:12082181, PubMed:19419305, PubMed:22510396, PubMed:25260930, PubMed:25479107, PubMed:26910915, PubMed:30111653, PubMed:35147247, PubMed:9662402). Preferentially hydrolyzes ATP, but can also hydrolyze other nucleoside 5' triphosphates such as GTP, CTP and UTP to their corresponding monophosphates with release of pyrophosphate, as well as diadenosine polyphosphates, and also 3',5'-cAMP to AMP (PubMed:11027689, PubMed:1647027, PubMed:23027977, PubMed:8223581). May also be involved in the regulation of the availability of nucleotide sugars in the endoplasmic reticulum and Golgi, and the regulation of purinergic signaling (PubMed:1647027). Inhibits ectopic joint calcification and maintains articular chondrocytes by repressing hedgehog signaling; it is however unclear whether hedgehog inhibition is direct or indirect (PubMed:30111653). Appears to modulate insulin sensitivity (By similarity). Also involved in melanogenesis (By similarity). Also able to hydrolyze 2',3'-cGAMP (cyclic GMP-AMP), a second messenger that activates TMEM173/STING and triggers type-I interferon production (PubMed:25344812). 2',3'-cGAMP degradation takes place in the lumen or extracellular space, and not in the cytosol where it is produced; the role of 2',3'-cGAMP hydrolysis is therefore unclear (By similarity). Not able to hydrolyze the 2',3'-cGAMP linkage isomer 3',3'-cGAMP (By similarity).</text>
</comment>
<comment type="catalytic activity">
    <reaction evidence="9 15 30">
        <text>Hydrolytically removes 5'-nucleotides successively from the 3'-hydroxy termini of 3'-hydroxy-terminated oligonucleotides.</text>
        <dbReference type="EC" id="3.1.4.1"/>
    </reaction>
</comment>
<comment type="catalytic activity">
    <reaction evidence="9 15 19 26 30">
        <text>a ribonucleoside 5'-triphosphate + H2O = a ribonucleoside 5'-phosphate + diphosphate + H(+)</text>
        <dbReference type="Rhea" id="RHEA:23996"/>
        <dbReference type="ChEBI" id="CHEBI:15377"/>
        <dbReference type="ChEBI" id="CHEBI:15378"/>
        <dbReference type="ChEBI" id="CHEBI:33019"/>
        <dbReference type="ChEBI" id="CHEBI:58043"/>
        <dbReference type="ChEBI" id="CHEBI:61557"/>
        <dbReference type="EC" id="3.6.1.9"/>
    </reaction>
    <physiologicalReaction direction="left-to-right" evidence="26">
        <dbReference type="Rhea" id="RHEA:23997"/>
    </physiologicalReaction>
</comment>
<comment type="catalytic activity">
    <reaction evidence="19">
        <text>ATP + H2O = AMP + diphosphate + H(+)</text>
        <dbReference type="Rhea" id="RHEA:14245"/>
        <dbReference type="ChEBI" id="CHEBI:15377"/>
        <dbReference type="ChEBI" id="CHEBI:15378"/>
        <dbReference type="ChEBI" id="CHEBI:30616"/>
        <dbReference type="ChEBI" id="CHEBI:33019"/>
        <dbReference type="ChEBI" id="CHEBI:456215"/>
        <dbReference type="EC" id="3.6.1.9"/>
    </reaction>
    <physiologicalReaction direction="left-to-right" evidence="38">
        <dbReference type="Rhea" id="RHEA:14246"/>
    </physiologicalReaction>
</comment>
<comment type="catalytic activity">
    <reaction evidence="19">
        <text>UTP + H2O = UMP + diphosphate + H(+)</text>
        <dbReference type="Rhea" id="RHEA:29395"/>
        <dbReference type="ChEBI" id="CHEBI:15377"/>
        <dbReference type="ChEBI" id="CHEBI:15378"/>
        <dbReference type="ChEBI" id="CHEBI:33019"/>
        <dbReference type="ChEBI" id="CHEBI:46398"/>
        <dbReference type="ChEBI" id="CHEBI:57865"/>
        <dbReference type="EC" id="3.6.1.9"/>
    </reaction>
    <physiologicalReaction direction="left-to-right" evidence="38">
        <dbReference type="Rhea" id="RHEA:29396"/>
    </physiologicalReaction>
</comment>
<comment type="catalytic activity">
    <reaction evidence="19">
        <text>GTP + H2O = GMP + diphosphate + H(+)</text>
        <dbReference type="Rhea" id="RHEA:29391"/>
        <dbReference type="ChEBI" id="CHEBI:15377"/>
        <dbReference type="ChEBI" id="CHEBI:15378"/>
        <dbReference type="ChEBI" id="CHEBI:33019"/>
        <dbReference type="ChEBI" id="CHEBI:37565"/>
        <dbReference type="ChEBI" id="CHEBI:58115"/>
        <dbReference type="EC" id="3.6.1.9"/>
    </reaction>
    <physiologicalReaction direction="left-to-right" evidence="38">
        <dbReference type="Rhea" id="RHEA:29392"/>
    </physiologicalReaction>
</comment>
<comment type="catalytic activity">
    <reaction evidence="19">
        <text>CTP + H2O = CMP + diphosphate + H(+)</text>
        <dbReference type="Rhea" id="RHEA:27762"/>
        <dbReference type="ChEBI" id="CHEBI:15377"/>
        <dbReference type="ChEBI" id="CHEBI:15378"/>
        <dbReference type="ChEBI" id="CHEBI:33019"/>
        <dbReference type="ChEBI" id="CHEBI:37563"/>
        <dbReference type="ChEBI" id="CHEBI:60377"/>
        <dbReference type="EC" id="3.6.1.9"/>
    </reaction>
    <physiologicalReaction direction="left-to-right" evidence="38">
        <dbReference type="Rhea" id="RHEA:27763"/>
    </physiologicalReaction>
</comment>
<comment type="catalytic activity">
    <reaction evidence="26">
        <text>2',3'-cGAMP + 2 H2O = GMP + AMP + 2 H(+)</text>
        <dbReference type="Rhea" id="RHEA:58808"/>
        <dbReference type="ChEBI" id="CHEBI:15377"/>
        <dbReference type="ChEBI" id="CHEBI:15378"/>
        <dbReference type="ChEBI" id="CHEBI:58115"/>
        <dbReference type="ChEBI" id="CHEBI:143093"/>
        <dbReference type="ChEBI" id="CHEBI:456215"/>
    </reaction>
    <physiologicalReaction direction="left-to-right" evidence="26">
        <dbReference type="Rhea" id="RHEA:58809"/>
    </physiologicalReaction>
</comment>
<comment type="catalytic activity">
    <reaction evidence="1">
        <text>P(1),P(4)-bis(5'-adenosyl) tetraphosphate + H2O = AMP + ATP + 2 H(+)</text>
        <dbReference type="Rhea" id="RHEA:32039"/>
        <dbReference type="ChEBI" id="CHEBI:15377"/>
        <dbReference type="ChEBI" id="CHEBI:15378"/>
        <dbReference type="ChEBI" id="CHEBI:30616"/>
        <dbReference type="ChEBI" id="CHEBI:58141"/>
        <dbReference type="ChEBI" id="CHEBI:456215"/>
    </reaction>
    <physiologicalReaction direction="left-to-right" evidence="1">
        <dbReference type="Rhea" id="RHEA:32040"/>
    </physiologicalReaction>
</comment>
<comment type="catalytic activity">
    <reaction evidence="1">
        <text>3',5'-cyclic AMP + H2O = AMP + H(+)</text>
        <dbReference type="Rhea" id="RHEA:25277"/>
        <dbReference type="ChEBI" id="CHEBI:15377"/>
        <dbReference type="ChEBI" id="CHEBI:15378"/>
        <dbReference type="ChEBI" id="CHEBI:58165"/>
        <dbReference type="ChEBI" id="CHEBI:456215"/>
    </reaction>
    <physiologicalReaction direction="left-to-right" evidence="1">
        <dbReference type="Rhea" id="RHEA:25278"/>
    </physiologicalReaction>
</comment>
<comment type="cofactor">
    <cofactor evidence="19 20 26">
        <name>Zn(2+)</name>
        <dbReference type="ChEBI" id="CHEBI:29105"/>
    </cofactor>
    <text evidence="19 20 26">Binds 2 Zn(2+) ions per subunit.</text>
</comment>
<comment type="activity regulation">
    <text evidence="9">At low concentrations of ATP, a phosphorylated intermediate is formed which inhibits further hydrolysis.</text>
</comment>
<comment type="biophysicochemical properties">
    <kinetics>
        <KM evidence="19">46 uM for ATP</KM>
        <KM evidence="19">4.3 mM for UTP</KM>
        <KM evidence="19">4.2 mM for GTP</KM>
        <KM evidence="19">1.2 mM for CTP</KM>
        <text evidence="19">kcat is 16 sec(-1) with ATP as substrate. kcat is 200 sec(-1) with UTP as substrate. kcat is 820 sec(-1) with GTP as substrate. kcat is 8.7 sec(-1) with CTP as substrate.</text>
    </kinetics>
</comment>
<comment type="subunit">
    <text evidence="1 19 20">Ectonucleotide pyrophosphatase/phosphodiesterase family member 1: Homodimer (PubMed:23027977, PubMed:23041369). Ectonucleotide pyrophosphatase/phosphodiesterase family member 1: Interacts with INSR; leading to inhibit INSR autophosphorylation and subsequent activation of INSR kinase activity (By similarity). Ectonucleotide pyrophosphatase/phosphodiesterase family member 1, secreted form: Monomeric (PubMed:23041369).</text>
</comment>
<comment type="interaction">
    <interactant intactId="EBI-16016057">
        <id>P06802</id>
    </interactant>
    <interactant intactId="EBI-16016057">
        <id>P06802</id>
        <label>Enpp1</label>
    </interactant>
    <organismsDiffer>false</organismsDiffer>
    <experiments>2</experiments>
</comment>
<comment type="subcellular location">
    <molecule>Ectonucleotide pyrophosphatase/phosphodiesterase family member 1</molecule>
    <subcellularLocation>
        <location evidence="15 27 29">Cell membrane</location>
        <topology>Single-pass type II membrane protein</topology>
    </subcellularLocation>
    <subcellularLocation>
        <location evidence="10 14">Basolateral cell membrane</location>
        <topology>Single-pass type II membrane protein</topology>
    </subcellularLocation>
    <text evidence="10 14">Targeted to the basolateral membrane in polarized epithelial cells and in hepatocytes, and to matrix vesicles in osteoblasts.</text>
</comment>
<comment type="subcellular location">
    <molecule>Ectonucleotide pyrophosphatase/phosphodiesterase family member 1, secreted form</molecule>
    <subcellularLocation>
        <location evidence="20 30">Secreted</location>
    </subcellularLocation>
    <text evidence="20">Secreted following proteolytic cleavage.</text>
</comment>
<comment type="alternative products">
    <event type="alternative splicing"/>
    <isoform>
        <id>P06802-1</id>
        <name>2</name>
        <sequence type="displayed"/>
    </isoform>
    <isoform>
        <id>P06802-2</id>
        <name>1</name>
        <sequence type="described" ref="VSP_006748"/>
    </isoform>
</comment>
<comment type="tissue specificity">
    <text evidence="21 27">Selectively expressed on the surface of antibody-secreting cells (PubMed:3104326). Expressed in osteocytes and osteoclasts (PubMed:25260930).</text>
</comment>
<comment type="domain">
    <text evidence="13">The nuclease-like domain is most probably catalytically inactive as residues that are essential for catalysis in the DNA/RNA non-specific endonucleases are not conserved. However, it is required for the stability of the protein and the catalytic activity born by the phosphodiesterase domain.</text>
</comment>
<comment type="domain">
    <text evidence="10 14">The di-leucine motif is required for basolateral targeting in polarized epithelial cells, and for targeting to matrix vesicles derived from mineralizing cells.</text>
</comment>
<comment type="PTM">
    <text evidence="15 17 19 20 30">N-glycosylated.</text>
</comment>
<comment type="PTM">
    <text evidence="20">The secreted form is produced through cleavage at Lys-85 by intracellular processing.</text>
</comment>
<comment type="disease">
    <text evidence="18 31">Defects in Enpp1 are the cause of the tiptoe walking (ttw) phenotype. Ttw mice exhibit ossification of the spinal ligaments (PubMed:9662402). Mice display increased bone formation process in joints and develop spontaneous osteoarthritis-like changes (PubMed:22510396).</text>
</comment>
<comment type="disease">
    <text evidence="23 24">Defects in Enpp1 are the cause of spontaneous asj-2J mutant characterized by gait due to stiffening of the joints (PubMed:25479107). Defects are caused by a significant reduction in the plasma diphosphate (PPi) concentration, leading to extensive aberrant mineralization affecting the arterial vasculature, a number of internal organs and the dermal sheath of vibrissae (PubMed:25479107). Asj-2J mice are used as a model for arterial calcification of infancy disorder (GACI1) (PubMed:25479107). Mice also show ectopic mineralization of cartilage and collagen-rich tendons and ligaments (PubMed:26910915).</text>
</comment>
<comment type="disruption phenotype">
    <text evidence="11 21 28">Mice show ectopic calcification of articular cartilage, the joint capsule and certain tendons (PubMed:25260930). Mice also display calcification of the joints and vertebrae as well as soft tissues including the whisker follicles, ear pinna and trachea (PubMed:25260930). This calcification worsened as the animals aged (PubMed:25260930). Bone mineralization in mice lacking both Enpp1 and Alpl is essentially normal, demonstrating that Enpp1 and Alpl are antagonist key regulators of bone mineralization by determining the normal steady-state levels of diphosphate (PPi) (PubMed:12082181). Bones and plasma of deficient mice are almost devoid of PPi.</text>
</comment>
<comment type="similarity">
    <text evidence="36">Belongs to the nucleotide pyrophosphatase/phosphodiesterase family.</text>
</comment>
<comment type="caution">
    <text evidence="36">It is uncertain whether Met-1 or Met-35 is the initiator.</text>
</comment>
<organism>
    <name type="scientific">Mus musculus</name>
    <name type="common">Mouse</name>
    <dbReference type="NCBI Taxonomy" id="10090"/>
    <lineage>
        <taxon>Eukaryota</taxon>
        <taxon>Metazoa</taxon>
        <taxon>Chordata</taxon>
        <taxon>Craniata</taxon>
        <taxon>Vertebrata</taxon>
        <taxon>Euteleostomi</taxon>
        <taxon>Mammalia</taxon>
        <taxon>Eutheria</taxon>
        <taxon>Euarchontoglires</taxon>
        <taxon>Glires</taxon>
        <taxon>Rodentia</taxon>
        <taxon>Myomorpha</taxon>
        <taxon>Muroidea</taxon>
        <taxon>Muridae</taxon>
        <taxon>Murinae</taxon>
        <taxon>Mus</taxon>
        <taxon>Mus</taxon>
    </lineage>
</organism>
<proteinExistence type="evidence at protein level"/>
<protein>
    <recommendedName>
        <fullName>Ectonucleotide pyrophosphatase/phosphodiesterase family member 1</fullName>
        <shortName>E-NPP 1</shortName>
    </recommendedName>
    <alternativeName>
        <fullName>Alkaline phosphodiesterase I</fullName>
        <ecNumber evidence="9 15 19 30">3.1.4.1</ecNumber>
    </alternativeName>
    <alternativeName>
        <fullName>Lymphocyte antigen 41</fullName>
        <shortName>Ly-41</shortName>
    </alternativeName>
    <alternativeName>
        <fullName evidence="36">Nucleotide diphosphatase</fullName>
    </alternativeName>
    <alternativeName>
        <fullName>Nucleotide pyrophosphatase</fullName>
        <shortName>NPPase</shortName>
        <ecNumber evidence="9 15 19 30">3.6.1.9</ecNumber>
    </alternativeName>
    <alternativeName>
        <fullName>Phosphodiesterase I/nucleotide pyrophosphatase 1</fullName>
    </alternativeName>
    <alternativeName>
        <fullName evidence="34">Plasma-cell membrane glycoprotein PC-1</fullName>
    </alternativeName>
    <component>
        <recommendedName>
            <fullName evidence="36">Ectonucleotide pyrophosphatase/phosphodiesterase family member 1, secreted form</fullName>
        </recommendedName>
    </component>
</protein>
<evidence type="ECO:0000250" key="1">
    <source>
        <dbReference type="UniProtKB" id="P22413"/>
    </source>
</evidence>
<evidence type="ECO:0000250" key="2">
    <source>
        <dbReference type="UniProtKB" id="Q924C3"/>
    </source>
</evidence>
<evidence type="ECO:0000250" key="3">
    <source>
        <dbReference type="UniProtKB" id="Q9R1E6"/>
    </source>
</evidence>
<evidence type="ECO:0000255" key="4"/>
<evidence type="ECO:0000255" key="5">
    <source>
        <dbReference type="PROSITE-ProRule" id="PRU00350"/>
    </source>
</evidence>
<evidence type="ECO:0000256" key="6">
    <source>
        <dbReference type="SAM" id="MobiDB-lite"/>
    </source>
</evidence>
<evidence type="ECO:0000269" key="7">
    <source>
    </source>
</evidence>
<evidence type="ECO:0000269" key="8">
    <source>
    </source>
</evidence>
<evidence type="ECO:0000269" key="9">
    <source>
    </source>
</evidence>
<evidence type="ECO:0000269" key="10">
    <source>
    </source>
</evidence>
<evidence type="ECO:0000269" key="11">
    <source>
    </source>
</evidence>
<evidence type="ECO:0000269" key="12">
    <source>
    </source>
</evidence>
<evidence type="ECO:0000269" key="13">
    <source>
    </source>
</evidence>
<evidence type="ECO:0000269" key="14">
    <source>
    </source>
</evidence>
<evidence type="ECO:0000269" key="15">
    <source>
    </source>
</evidence>
<evidence type="ECO:0000269" key="16">
    <source>
    </source>
</evidence>
<evidence type="ECO:0000269" key="17">
    <source>
    </source>
</evidence>
<evidence type="ECO:0000269" key="18">
    <source>
    </source>
</evidence>
<evidence type="ECO:0000269" key="19">
    <source>
    </source>
</evidence>
<evidence type="ECO:0000269" key="20">
    <source>
    </source>
</evidence>
<evidence type="ECO:0000269" key="21">
    <source>
    </source>
</evidence>
<evidence type="ECO:0000269" key="22">
    <source>
    </source>
</evidence>
<evidence type="ECO:0000269" key="23">
    <source>
    </source>
</evidence>
<evidence type="ECO:0000269" key="24">
    <source>
    </source>
</evidence>
<evidence type="ECO:0000269" key="25">
    <source>
    </source>
</evidence>
<evidence type="ECO:0000269" key="26">
    <source>
    </source>
</evidence>
<evidence type="ECO:0000269" key="27">
    <source>
    </source>
</evidence>
<evidence type="ECO:0000269" key="28">
    <source>
    </source>
</evidence>
<evidence type="ECO:0000269" key="29">
    <source>
    </source>
</evidence>
<evidence type="ECO:0000269" key="30">
    <source>
    </source>
</evidence>
<evidence type="ECO:0000269" key="31">
    <source>
    </source>
</evidence>
<evidence type="ECO:0000303" key="32">
    <source>
    </source>
</evidence>
<evidence type="ECO:0000303" key="33">
    <source>
    </source>
</evidence>
<evidence type="ECO:0000303" key="34">
    <source>
    </source>
</evidence>
<evidence type="ECO:0000303" key="35">
    <source>
    </source>
</evidence>
<evidence type="ECO:0000305" key="36"/>
<evidence type="ECO:0000305" key="37">
    <source>
    </source>
</evidence>
<evidence type="ECO:0000305" key="38">
    <source>
    </source>
</evidence>
<evidence type="ECO:0000305" key="39">
    <source>
    </source>
</evidence>
<evidence type="ECO:0000312" key="40">
    <source>
        <dbReference type="MGI" id="MGI:97370"/>
    </source>
</evidence>
<evidence type="ECO:0000312" key="41">
    <source>
        <dbReference type="PDB" id="4GTW"/>
    </source>
</evidence>
<evidence type="ECO:0000312" key="42">
    <source>
        <dbReference type="PDB" id="4GTZ"/>
    </source>
</evidence>
<evidence type="ECO:0007744" key="43">
    <source>
        <dbReference type="PDB" id="4B56"/>
    </source>
</evidence>
<evidence type="ECO:0007744" key="44">
    <source>
        <dbReference type="PDB" id="4GTW"/>
    </source>
</evidence>
<evidence type="ECO:0007744" key="45">
    <source>
        <dbReference type="PDB" id="4GTX"/>
    </source>
</evidence>
<evidence type="ECO:0007744" key="46">
    <source>
        <dbReference type="PDB" id="4GTY"/>
    </source>
</evidence>
<evidence type="ECO:0007744" key="47">
    <source>
        <dbReference type="PDB" id="4GTZ"/>
    </source>
</evidence>
<evidence type="ECO:0007744" key="48">
    <source>
        <dbReference type="PDB" id="6AEK"/>
    </source>
</evidence>
<evidence type="ECO:0007744" key="49">
    <source>
        <dbReference type="PDB" id="6AEL"/>
    </source>
</evidence>
<evidence type="ECO:0007829" key="50">
    <source>
        <dbReference type="PDB" id="4B56"/>
    </source>
</evidence>
<evidence type="ECO:0007829" key="51">
    <source>
        <dbReference type="PDB" id="4GTW"/>
    </source>
</evidence>
<evidence type="ECO:0007829" key="52">
    <source>
        <dbReference type="PDB" id="4GTX"/>
    </source>
</evidence>
<evidence type="ECO:0007829" key="53">
    <source>
        <dbReference type="PDB" id="4GTZ"/>
    </source>
</evidence>
<evidence type="ECO:0007829" key="54">
    <source>
        <dbReference type="PDB" id="6AEK"/>
    </source>
</evidence>
<evidence type="ECO:0007829" key="55">
    <source>
        <dbReference type="PDB" id="6AEL"/>
    </source>
</evidence>
<evidence type="ECO:0007829" key="56">
    <source>
        <dbReference type="PDB" id="6XKD"/>
    </source>
</evidence>
<keyword id="KW-0002">3D-structure</keyword>
<keyword id="KW-0025">Alternative splicing</keyword>
<keyword id="KW-0091">Biomineralization</keyword>
<keyword id="KW-0106">Calcium</keyword>
<keyword id="KW-1003">Cell membrane</keyword>
<keyword id="KW-0903">Direct protein sequencing</keyword>
<keyword id="KW-0225">Disease variant</keyword>
<keyword id="KW-1015">Disulfide bond</keyword>
<keyword id="KW-0325">Glycoprotein</keyword>
<keyword id="KW-0378">Hydrolase</keyword>
<keyword id="KW-0472">Membrane</keyword>
<keyword id="KW-0479">Metal-binding</keyword>
<keyword id="KW-0597">Phosphoprotein</keyword>
<keyword id="KW-1185">Reference proteome</keyword>
<keyword id="KW-0677">Repeat</keyword>
<keyword id="KW-0964">Secreted</keyword>
<keyword id="KW-0735">Signal-anchor</keyword>
<keyword id="KW-0812">Transmembrane</keyword>
<keyword id="KW-1133">Transmembrane helix</keyword>
<keyword id="KW-0862">Zinc</keyword>
<feature type="chain" id="PRO_0000188565" description="Ectonucleotide pyrophosphatase/phosphodiesterase family member 1">
    <location>
        <begin position="1"/>
        <end position="906"/>
    </location>
</feature>
<feature type="chain" id="PRO_0000447134" description="Ectonucleotide pyrophosphatase/phosphodiesterase family member 1, secreted form" evidence="39">
    <location>
        <begin position="85"/>
        <end position="906"/>
    </location>
</feature>
<feature type="topological domain" description="Cytoplasmic" evidence="4">
    <location>
        <begin position="1"/>
        <end position="58"/>
    </location>
</feature>
<feature type="transmembrane region" description="Helical; Signal-anchor for type II membrane protein" evidence="4">
    <location>
        <begin position="59"/>
        <end position="79"/>
    </location>
</feature>
<feature type="topological domain" description="Extracellular" evidence="4">
    <location>
        <begin position="80"/>
        <end position="906"/>
    </location>
</feature>
<feature type="domain" description="SMB 1" evidence="5">
    <location>
        <begin position="86"/>
        <end position="126"/>
    </location>
</feature>
<feature type="domain" description="SMB 2" evidence="5">
    <location>
        <begin position="127"/>
        <end position="171"/>
    </location>
</feature>
<feature type="region of interest" description="Disordered" evidence="6">
    <location>
        <begin position="1"/>
        <end position="22"/>
    </location>
</feature>
<feature type="region of interest" description="Phosphodiesterase" evidence="38 39">
    <location>
        <begin position="173"/>
        <end position="573"/>
    </location>
</feature>
<feature type="region of interest" description="Linker" evidence="38 39">
    <location>
        <begin position="579"/>
        <end position="628"/>
    </location>
</feature>
<feature type="region of interest" description="Nuclease-like domain" evidence="37 38 39">
    <location>
        <begin position="635"/>
        <end position="906"/>
    </location>
</feature>
<feature type="short sequence motif" description="Di-leucine motif" evidence="10 14">
    <location>
        <begin position="27"/>
        <end position="34"/>
    </location>
</feature>
<feature type="active site" description="AMP-threonine intermediate" evidence="9">
    <location>
        <position position="238"/>
    </location>
</feature>
<feature type="binding site" evidence="19 41">
    <location>
        <position position="200"/>
    </location>
    <ligand>
        <name>AMP</name>
        <dbReference type="ChEBI" id="CHEBI:456215"/>
    </ligand>
</feature>
<feature type="binding site" evidence="19 20 26">
    <location>
        <position position="200"/>
    </location>
    <ligand>
        <name>Zn(2+)</name>
        <dbReference type="ChEBI" id="CHEBI:29105"/>
        <label>1</label>
        <note>catalytic</note>
    </ligand>
</feature>
<feature type="binding site" evidence="19 41">
    <location>
        <position position="238"/>
    </location>
    <ligand>
        <name>AMP</name>
        <dbReference type="ChEBI" id="CHEBI:456215"/>
    </ligand>
</feature>
<feature type="binding site" evidence="19 42">
    <location>
        <position position="238"/>
    </location>
    <ligand>
        <name>CMP</name>
        <dbReference type="ChEBI" id="CHEBI:60377"/>
    </ligand>
</feature>
<feature type="binding site" evidence="19 45">
    <location>
        <position position="238"/>
    </location>
    <ligand>
        <name>dTMP</name>
        <dbReference type="ChEBI" id="CHEBI:63528"/>
    </ligand>
</feature>
<feature type="binding site" evidence="19 46">
    <location>
        <position position="238"/>
    </location>
    <ligand>
        <name>GMP</name>
        <dbReference type="ChEBI" id="CHEBI:58115"/>
    </ligand>
</feature>
<feature type="binding site" evidence="19 20">
    <location>
        <position position="238"/>
    </location>
    <ligand>
        <name>Zn(2+)</name>
        <dbReference type="ChEBI" id="CHEBI:29105"/>
        <label>1</label>
        <note>catalytic</note>
    </ligand>
</feature>
<feature type="binding site" evidence="19 41">
    <location>
        <position position="259"/>
    </location>
    <ligand>
        <name>AMP</name>
        <dbReference type="ChEBI" id="CHEBI:456215"/>
    </ligand>
</feature>
<feature type="binding site" evidence="19 42">
    <location>
        <position position="259"/>
    </location>
    <ligand>
        <name>CMP</name>
        <dbReference type="ChEBI" id="CHEBI:60377"/>
    </ligand>
</feature>
<feature type="binding site" evidence="19 45">
    <location>
        <position position="259"/>
    </location>
    <ligand>
        <name>dTMP</name>
        <dbReference type="ChEBI" id="CHEBI:63528"/>
    </ligand>
</feature>
<feature type="binding site" evidence="19 46">
    <location>
        <position position="259"/>
    </location>
    <ligand>
        <name>GMP</name>
        <dbReference type="ChEBI" id="CHEBI:58115"/>
    </ligand>
</feature>
<feature type="binding site" evidence="19 46">
    <location>
        <position position="272"/>
    </location>
    <ligand>
        <name>GMP</name>
        <dbReference type="ChEBI" id="CHEBI:58115"/>
    </ligand>
</feature>
<feature type="binding site" evidence="19 41">
    <location>
        <position position="277"/>
    </location>
    <ligand>
        <name>AMP</name>
        <dbReference type="ChEBI" id="CHEBI:456215"/>
    </ligand>
</feature>
<feature type="binding site" evidence="19 42">
    <location>
        <position position="277"/>
    </location>
    <ligand>
        <name>CMP</name>
        <dbReference type="ChEBI" id="CHEBI:60377"/>
    </ligand>
</feature>
<feature type="binding site" evidence="19 46">
    <location>
        <position position="277"/>
    </location>
    <ligand>
        <name>GMP</name>
        <dbReference type="ChEBI" id="CHEBI:58115"/>
    </ligand>
</feature>
<feature type="binding site" evidence="19 41">
    <location>
        <position position="322"/>
    </location>
    <ligand>
        <name>AMP</name>
        <dbReference type="ChEBI" id="CHEBI:456215"/>
    </ligand>
</feature>
<feature type="binding site" evidence="19 42">
    <location>
        <position position="322"/>
    </location>
    <ligand>
        <name>CMP</name>
        <dbReference type="ChEBI" id="CHEBI:60377"/>
    </ligand>
</feature>
<feature type="binding site" evidence="19 45">
    <location>
        <position position="322"/>
    </location>
    <ligand>
        <name>dTMP</name>
        <dbReference type="ChEBI" id="CHEBI:63528"/>
    </ligand>
</feature>
<feature type="binding site" evidence="19 46">
    <location>
        <position position="322"/>
    </location>
    <ligand>
        <name>GMP</name>
        <dbReference type="ChEBI" id="CHEBI:58115"/>
    </ligand>
</feature>
<feature type="binding site" evidence="19 41">
    <location>
        <position position="358"/>
    </location>
    <ligand>
        <name>AMP</name>
        <dbReference type="ChEBI" id="CHEBI:456215"/>
    </ligand>
</feature>
<feature type="binding site" evidence="19 42">
    <location>
        <position position="358"/>
    </location>
    <ligand>
        <name>CMP</name>
        <dbReference type="ChEBI" id="CHEBI:60377"/>
    </ligand>
</feature>
<feature type="binding site" evidence="19 45">
    <location>
        <position position="358"/>
    </location>
    <ligand>
        <name>dTMP</name>
        <dbReference type="ChEBI" id="CHEBI:63528"/>
    </ligand>
</feature>
<feature type="binding site" evidence="19 46">
    <location>
        <position position="358"/>
    </location>
    <ligand>
        <name>GMP</name>
        <dbReference type="ChEBI" id="CHEBI:58115"/>
    </ligand>
</feature>
<feature type="binding site" evidence="19 20 26">
    <location>
        <position position="358"/>
    </location>
    <ligand>
        <name>Zn(2+)</name>
        <dbReference type="ChEBI" id="CHEBI:29105"/>
        <label>2</label>
        <note>catalytic</note>
    </ligand>
</feature>
<feature type="binding site" evidence="26">
    <location>
        <position position="362"/>
    </location>
    <ligand>
        <name>2',3'-cGAMP</name>
        <dbReference type="ChEBI" id="CHEBI:143093"/>
        <note>substrate</note>
    </ligand>
</feature>
<feature type="binding site" evidence="19 20 26">
    <location>
        <position position="362"/>
    </location>
    <ligand>
        <name>Zn(2+)</name>
        <dbReference type="ChEBI" id="CHEBI:29105"/>
        <label>2</label>
        <note>catalytic</note>
    </ligand>
</feature>
<feature type="binding site" evidence="19 20 26">
    <location>
        <position position="405"/>
    </location>
    <ligand>
        <name>Zn(2+)</name>
        <dbReference type="ChEBI" id="CHEBI:29105"/>
        <label>1</label>
        <note>catalytic</note>
    </ligand>
</feature>
<feature type="binding site" evidence="19 41">
    <location>
        <position position="406"/>
    </location>
    <ligand>
        <name>AMP</name>
        <dbReference type="ChEBI" id="CHEBI:456215"/>
    </ligand>
</feature>
<feature type="binding site" evidence="19 42">
    <location>
        <position position="406"/>
    </location>
    <ligand>
        <name>CMP</name>
        <dbReference type="ChEBI" id="CHEBI:60377"/>
    </ligand>
</feature>
<feature type="binding site" evidence="19 45">
    <location>
        <position position="406"/>
    </location>
    <ligand>
        <name>dTMP</name>
        <dbReference type="ChEBI" id="CHEBI:63528"/>
    </ligand>
</feature>
<feature type="binding site" evidence="19 46">
    <location>
        <position position="406"/>
    </location>
    <ligand>
        <name>GMP</name>
        <dbReference type="ChEBI" id="CHEBI:58115"/>
    </ligand>
</feature>
<feature type="binding site" evidence="19 20 26">
    <location>
        <position position="406"/>
    </location>
    <ligand>
        <name>Zn(2+)</name>
        <dbReference type="ChEBI" id="CHEBI:29105"/>
        <label>1</label>
        <note>catalytic</note>
    </ligand>
</feature>
<feature type="binding site" evidence="26">
    <location>
        <position position="514"/>
    </location>
    <ligand>
        <name>2',3'-cGAMP</name>
        <dbReference type="ChEBI" id="CHEBI:143093"/>
        <note>substrate</note>
    </ligand>
</feature>
<feature type="binding site" evidence="19 41">
    <location>
        <position position="517"/>
    </location>
    <ligand>
        <name>AMP</name>
        <dbReference type="ChEBI" id="CHEBI:456215"/>
    </ligand>
</feature>
<feature type="binding site" evidence="19 42">
    <location>
        <position position="517"/>
    </location>
    <ligand>
        <name>CMP</name>
        <dbReference type="ChEBI" id="CHEBI:60377"/>
    </ligand>
</feature>
<feature type="binding site" evidence="19 45">
    <location>
        <position position="517"/>
    </location>
    <ligand>
        <name>dTMP</name>
        <dbReference type="ChEBI" id="CHEBI:63528"/>
    </ligand>
</feature>
<feature type="binding site" evidence="19 46">
    <location>
        <position position="517"/>
    </location>
    <ligand>
        <name>GMP</name>
        <dbReference type="ChEBI" id="CHEBI:58115"/>
    </ligand>
</feature>
<feature type="binding site" evidence="19 20 26">
    <location>
        <position position="517"/>
    </location>
    <ligand>
        <name>Zn(2+)</name>
        <dbReference type="ChEBI" id="CHEBI:29105"/>
        <label>2</label>
        <note>catalytic</note>
    </ligand>
</feature>
<feature type="binding site" evidence="19 20">
    <location>
        <position position="781"/>
    </location>
    <ligand>
        <name>Ca(2+)</name>
        <dbReference type="ChEBI" id="CHEBI:29108"/>
    </ligand>
</feature>
<feature type="binding site" evidence="19 20">
    <location>
        <position position="783"/>
    </location>
    <ligand>
        <name>Ca(2+)</name>
        <dbReference type="ChEBI" id="CHEBI:29108"/>
    </ligand>
</feature>
<feature type="binding site" evidence="19 20">
    <location>
        <position position="785"/>
    </location>
    <ligand>
        <name>Ca(2+)</name>
        <dbReference type="ChEBI" id="CHEBI:29108"/>
    </ligand>
</feature>
<feature type="binding site" evidence="19 20">
    <location>
        <position position="787"/>
    </location>
    <ligand>
        <name>Ca(2+)</name>
        <dbReference type="ChEBI" id="CHEBI:29108"/>
    </ligand>
</feature>
<feature type="binding site" evidence="19 20">
    <location>
        <position position="789"/>
    </location>
    <ligand>
        <name>Ca(2+)</name>
        <dbReference type="ChEBI" id="CHEBI:29108"/>
    </ligand>
</feature>
<feature type="site" description="Cleavage" evidence="20">
    <location>
        <begin position="84"/>
        <end position="85"/>
    </location>
</feature>
<feature type="site" description="Essential for catalytic activity" evidence="3">
    <location>
        <position position="896"/>
    </location>
</feature>
<feature type="modified residue" description="Phosphoserine" evidence="2">
    <location>
        <position position="25"/>
    </location>
</feature>
<feature type="modified residue" description="Phosphothreonine" evidence="2">
    <location>
        <position position="238"/>
    </location>
</feature>
<feature type="glycosylation site" description="N-linked (GlcNAc...) asparagine" evidence="4">
    <location>
        <position position="161"/>
    </location>
</feature>
<feature type="glycosylation site" description="N-linked (GlcNAc...) asparagine" evidence="17 19">
    <location>
        <position position="267"/>
    </location>
</feature>
<feature type="glycosylation site" description="N-linked (GlcNAc...) asparagine" evidence="17 19 20">
    <location>
        <position position="323"/>
    </location>
</feature>
<feature type="glycosylation site" description="N-linked (GlcNAc...) asparagine" evidence="20">
    <location>
        <position position="459"/>
    </location>
</feature>
<feature type="glycosylation site" description="N-linked (GlcNAc...) asparagine" evidence="19 20">
    <location>
        <position position="567"/>
    </location>
</feature>
<feature type="glycosylation site" description="N-linked (GlcNAc...) asparagine" evidence="17 20">
    <location>
        <position position="624"/>
    </location>
</feature>
<feature type="disulfide bond" evidence="5">
    <location>
        <begin position="90"/>
        <end position="104"/>
    </location>
</feature>
<feature type="disulfide bond" evidence="5">
    <location>
        <begin position="94"/>
        <end position="122"/>
    </location>
</feature>
<feature type="disulfide bond" evidence="5">
    <location>
        <begin position="102"/>
        <end position="115"/>
    </location>
</feature>
<feature type="disulfide bond" evidence="5">
    <location>
        <begin position="108"/>
        <end position="114"/>
    </location>
</feature>
<feature type="disulfide bond" evidence="5">
    <location>
        <begin position="131"/>
        <end position="148"/>
    </location>
</feature>
<feature type="disulfide bond" evidence="5">
    <location>
        <begin position="136"/>
        <end position="166"/>
    </location>
</feature>
<feature type="disulfide bond" evidence="5">
    <location>
        <begin position="146"/>
        <end position="159"/>
    </location>
</feature>
<feature type="disulfide bond" evidence="5">
    <location>
        <begin position="152"/>
        <end position="158"/>
    </location>
</feature>
<feature type="disulfide bond" evidence="19 20">
    <location>
        <begin position="177"/>
        <end position="223"/>
    </location>
</feature>
<feature type="disulfide bond" evidence="19 20">
    <location>
        <begin position="185"/>
        <end position="397"/>
    </location>
</feature>
<feature type="disulfide bond" evidence="19 20">
    <location>
        <begin position="413"/>
        <end position="512"/>
    </location>
</feature>
<feature type="disulfide bond" evidence="19 20">
    <location>
        <begin position="462"/>
        <end position="849"/>
    </location>
</feature>
<feature type="disulfide bond" evidence="19 20">
    <location>
        <begin position="596"/>
        <end position="653"/>
    </location>
</feature>
<feature type="disulfide bond" evidence="19 20">
    <location>
        <begin position="607"/>
        <end position="707"/>
    </location>
</feature>
<feature type="disulfide bond" evidence="19 20">
    <location>
        <begin position="609"/>
        <end position="692"/>
    </location>
</feature>
<feature type="disulfide bond" evidence="19 20">
    <location>
        <begin position="819"/>
        <end position="829"/>
    </location>
</feature>
<feature type="splice variant" id="VSP_006748" description="In isoform 1." evidence="32 34">
    <location>
        <position position="630"/>
    </location>
</feature>
<feature type="sequence variant" description="In ttw." evidence="31">
    <location>
        <begin position="568"/>
        <end position="906"/>
    </location>
</feature>
<feature type="sequence variant" description="In allele ENPP1b." evidence="12">
    <original>H</original>
    <variation>R</variation>
    <location>
        <position position="651"/>
    </location>
</feature>
<feature type="sequence variant" description="In allele ENPP1b." evidence="12">
    <original>R</original>
    <variation>S</variation>
    <location>
        <position position="680"/>
    </location>
</feature>
<feature type="mutagenesis site" description="No effect on basolateral sorting in epithelial cells." evidence="10">
    <original>A</original>
    <variation>G</variation>
    <location>
        <position position="28"/>
    </location>
</feature>
<feature type="mutagenesis site" description="Little change in baolateral sorting in epithelial cells." evidence="10">
    <original>S</original>
    <variation>A</variation>
    <variation>D</variation>
    <location>
        <position position="30"/>
    </location>
</feature>
<feature type="mutagenesis site" description="60% of ENPP1 redirected to apical surface in epithelial cells. 75% of ENPP1 redirected to apical surface in epithelial cells; abrogation of increased NPP activity in oestoblastic matrix vesicles; when associated with A-32." evidence="10 14">
    <original>L</original>
    <variation>A</variation>
    <location>
        <position position="31"/>
    </location>
</feature>
<feature type="mutagenesis site" description="70% of ENPP1 redirected to apical surface in epithelial cells; abrogation of increased NPP activity in oestoblastic matrix vesicles. 75% of ENPP1 redirected to apical surface in epithelial cells; abrogation of increased NPP activity in oestoblastic matrix vesicles; when associated with A-31." evidence="10 14">
    <original>L</original>
    <variation>A</variation>
    <location>
        <position position="32"/>
    </location>
</feature>
<feature type="mutagenesis site" description="No change in increased NPP activity in oestoblastic matrix vesicles." evidence="14">
    <original>L</original>
    <variation>A</variation>
    <location>
        <position position="42"/>
    </location>
</feature>
<feature type="mutagenesis site" description="No change in increased NPP activity in oestoblastic matrix vesicles." evidence="14">
    <original>Y</original>
    <variation>G</variation>
    <location>
        <position position="57"/>
    </location>
</feature>
<feature type="mutagenesis site" description="Decreases phosphodiesterase activity by 95%. Abolishes formation of nucleotidylated intermediate." evidence="9">
    <original>D</original>
    <variation>N</variation>
    <location>
        <position position="200"/>
    </location>
</feature>
<feature type="mutagenesis site" description="Decreases phosphodiesterase activity by 40%. Decreased formation of nucleotidylated intermediate." evidence="9">
    <original>K</original>
    <variation>A</variation>
    <location>
        <position position="237"/>
    </location>
</feature>
<feature type="mutagenesis site" description="Abolishes all phosphodiesterase activity. Abolishes formation of nucleotidylated intermediate." evidence="9 26">
    <original>T</original>
    <variation>A</variation>
    <location>
        <position position="238"/>
    </location>
</feature>
<feature type="mutagenesis site" description="Decreases phosphodiesterase activity by 95%. Accumulates nucleotidylated intermediate." evidence="9">
    <original>T</original>
    <variation>S</variation>
    <location>
        <position position="238"/>
    </location>
</feature>
<feature type="mutagenesis site" description="Decreases phosphodiesterase activity by 50%. Decreased formation of nucleotidylated intermediate." evidence="9 19">
    <original>F</original>
    <variation>A</variation>
    <location>
        <position position="239"/>
    </location>
</feature>
<feature type="mutagenesis site" description="Strongly decreased phosphodiesterase activity." evidence="19">
    <original>H</original>
    <variation>L</variation>
    <location>
        <position position="242"/>
    </location>
</feature>
<feature type="mutagenesis site" description="Nearly abolishes activity with nucleotide phosphates. Confers very low activity with lysophospholipids." evidence="19">
    <location>
        <begin position="304"/>
        <end position="323"/>
    </location>
</feature>
<feature type="mutagenesis site" description="Decreased phosphodiesterase activity." evidence="19">
    <original>D</original>
    <variation>A</variation>
    <location>
        <position position="308"/>
    </location>
</feature>
<feature type="mutagenesis site" description="Strongly decreased phosphodiesterase activity." evidence="19">
    <original>Y</original>
    <variation>A</variation>
    <location>
        <position position="322"/>
    </location>
</feature>
<feature type="mutagenesis site" description="Decreases phosphodiesterase activity by 90%. Accumulates nucleotidylated intermediate." evidence="9">
    <original>D</original>
    <variation>Q</variation>
    <location>
        <position position="358"/>
    </location>
</feature>
<feature type="mutagenesis site" description="Decreases phosphodiesterase activity by 95%. 65% activity can be restored by addition of Zn(2+) ions. Accumulates nucleotidylated intermediate." evidence="9">
    <original>H</original>
    <variation>Q</variation>
    <location>
        <position position="362"/>
    </location>
</feature>
<feature type="mutagenesis site" description="Mice display a low bone mass density and show a striking joint disease and calcification of blood vessels. Probably affects protein stability." evidence="16">
    <original>C</original>
    <variation>S</variation>
    <location>
        <position position="397"/>
    </location>
</feature>
<feature type="mutagenesis site" description="Abolishes all phosphodiesterase activity. 10% activity can be restored by addition of Zn(2+) ions. Abolishes formation of nucleotidylated intermediate." evidence="9">
    <original>D</original>
    <variation>N</variation>
    <location>
        <position position="405"/>
    </location>
</feature>
<feature type="mutagenesis site" description="Abolishes all phosphodiesterase activity. 15% activity can be restored by addition of Zn(2+) ions. Abolishes formation of nucleotidylated intermediate." evidence="9">
    <original>H</original>
    <variation>Q</variation>
    <location>
        <position position="406"/>
    </location>
</feature>
<feature type="mutagenesis site" description="Abolished ability to hydrolyze 2',3'-cGAMP without affecting ability to hydrolyze ATP." evidence="26">
    <original>S</original>
    <variation>L</variation>
    <location>
        <position position="514"/>
    </location>
</feature>
<feature type="mutagenesis site" description="Abolishes all phosphodiesterase activity. 60% activity can be restored by addition of Zn(2+) ions. Abolishes formation of nucleotidylated intermediate." evidence="9">
    <original>H</original>
    <variation>Q</variation>
    <location>
        <position position="517"/>
    </location>
</feature>
<feature type="turn" evidence="50">
    <location>
        <begin position="94"/>
        <end position="96"/>
    </location>
</feature>
<feature type="strand" evidence="50">
    <location>
        <begin position="100"/>
        <end position="103"/>
    </location>
</feature>
<feature type="helix" evidence="50">
    <location>
        <begin position="108"/>
        <end position="111"/>
    </location>
</feature>
<feature type="helix" evidence="50">
    <location>
        <begin position="118"/>
        <end position="122"/>
    </location>
</feature>
<feature type="helix" evidence="50">
    <location>
        <begin position="124"/>
        <end position="126"/>
    </location>
</feature>
<feature type="turn" evidence="50">
    <location>
        <begin position="133"/>
        <end position="137"/>
    </location>
</feature>
<feature type="strand" evidence="50">
    <location>
        <begin position="145"/>
        <end position="147"/>
    </location>
</feature>
<feature type="helix" evidence="50">
    <location>
        <begin position="152"/>
        <end position="155"/>
    </location>
</feature>
<feature type="helix" evidence="50">
    <location>
        <begin position="162"/>
        <end position="167"/>
    </location>
</feature>
<feature type="turn" evidence="54">
    <location>
        <begin position="172"/>
        <end position="174"/>
    </location>
</feature>
<feature type="strand" evidence="54">
    <location>
        <begin position="194"/>
        <end position="199"/>
    </location>
</feature>
<feature type="helix" evidence="54">
    <location>
        <begin position="204"/>
        <end position="210"/>
    </location>
</feature>
<feature type="helix" evidence="54">
    <location>
        <begin position="211"/>
        <end position="213"/>
    </location>
</feature>
<feature type="helix" evidence="54">
    <location>
        <begin position="215"/>
        <end position="222"/>
    </location>
</feature>
<feature type="strand" evidence="54">
    <location>
        <begin position="224"/>
        <end position="228"/>
    </location>
</feature>
<feature type="helix" evidence="54">
    <location>
        <begin position="238"/>
        <end position="247"/>
    </location>
</feature>
<feature type="helix" evidence="54">
    <location>
        <begin position="251"/>
        <end position="254"/>
    </location>
</feature>
<feature type="strand" evidence="54">
    <location>
        <begin position="258"/>
        <end position="263"/>
    </location>
</feature>
<feature type="turn" evidence="54">
    <location>
        <begin position="264"/>
        <end position="267"/>
    </location>
</feature>
<feature type="strand" evidence="54">
    <location>
        <begin position="268"/>
        <end position="270"/>
    </location>
</feature>
<feature type="strand" evidence="51">
    <location>
        <begin position="272"/>
        <end position="274"/>
    </location>
</feature>
<feature type="helix" evidence="54">
    <location>
        <begin position="275"/>
        <end position="278"/>
    </location>
</feature>
<feature type="helix" evidence="54">
    <location>
        <begin position="280"/>
        <end position="282"/>
    </location>
</feature>
<feature type="helix" evidence="54">
    <location>
        <begin position="288"/>
        <end position="294"/>
    </location>
</feature>
<feature type="strand" evidence="54">
    <location>
        <begin position="299"/>
        <end position="303"/>
    </location>
</feature>
<feature type="turn" evidence="54">
    <location>
        <begin position="305"/>
        <end position="308"/>
    </location>
</feature>
<feature type="strand" evidence="50">
    <location>
        <begin position="311"/>
        <end position="313"/>
    </location>
</feature>
<feature type="strand" evidence="55">
    <location>
        <begin position="317"/>
        <end position="319"/>
    </location>
</feature>
<feature type="helix" evidence="54">
    <location>
        <begin position="328"/>
        <end position="338"/>
    </location>
</feature>
<feature type="turn" evidence="54">
    <location>
        <begin position="343"/>
        <end position="345"/>
    </location>
</feature>
<feature type="strand" evidence="54">
    <location>
        <begin position="348"/>
        <end position="354"/>
    </location>
</feature>
<feature type="helix" evidence="54">
    <location>
        <begin position="358"/>
        <end position="364"/>
    </location>
</feature>
<feature type="strand" evidence="54">
    <location>
        <begin position="366"/>
        <end position="368"/>
    </location>
</feature>
<feature type="helix" evidence="54">
    <location>
        <begin position="369"/>
        <end position="391"/>
    </location>
</feature>
<feature type="turn" evidence="56">
    <location>
        <begin position="395"/>
        <end position="397"/>
    </location>
</feature>
<feature type="strand" evidence="54">
    <location>
        <begin position="399"/>
        <end position="403"/>
    </location>
</feature>
<feature type="strand" evidence="54">
    <location>
        <begin position="415"/>
        <end position="418"/>
    </location>
</feature>
<feature type="helix" evidence="54">
    <location>
        <begin position="420"/>
        <end position="423"/>
    </location>
</feature>
<feature type="strand" evidence="54">
    <location>
        <begin position="428"/>
        <end position="432"/>
    </location>
</feature>
<feature type="strand" evidence="51">
    <location>
        <begin position="434"/>
        <end position="436"/>
    </location>
</feature>
<feature type="strand" evidence="54">
    <location>
        <begin position="438"/>
        <end position="443"/>
    </location>
</feature>
<feature type="turn" evidence="54">
    <location>
        <begin position="444"/>
        <end position="450"/>
    </location>
</feature>
<feature type="helix" evidence="54">
    <location>
        <begin position="453"/>
        <end position="459"/>
    </location>
</feature>
<feature type="strand" evidence="52">
    <location>
        <begin position="460"/>
        <end position="462"/>
    </location>
</feature>
<feature type="strand" evidence="54">
    <location>
        <begin position="468"/>
        <end position="473"/>
    </location>
</feature>
<feature type="helix" evidence="54">
    <location>
        <begin position="474"/>
        <end position="476"/>
    </location>
</feature>
<feature type="helix" evidence="54">
    <location>
        <begin position="479"/>
        <end position="481"/>
    </location>
</feature>
<feature type="strand" evidence="56">
    <location>
        <begin position="484"/>
        <end position="486"/>
    </location>
</feature>
<feature type="strand" evidence="51">
    <location>
        <begin position="487"/>
        <end position="489"/>
    </location>
</feature>
<feature type="strand" evidence="54">
    <location>
        <begin position="491"/>
        <end position="496"/>
    </location>
</feature>
<feature type="strand" evidence="54">
    <location>
        <begin position="501"/>
        <end position="505"/>
    </location>
</feature>
<feature type="strand" evidence="54">
    <location>
        <begin position="508"/>
        <end position="510"/>
    </location>
</feature>
<feature type="strand" evidence="54">
    <location>
        <begin position="514"/>
        <end position="516"/>
    </location>
</feature>
<feature type="helix" evidence="54">
    <location>
        <begin position="524"/>
        <end position="526"/>
    </location>
</feature>
<feature type="strand" evidence="54">
    <location>
        <begin position="530"/>
        <end position="534"/>
    </location>
</feature>
<feature type="strand" evidence="54">
    <location>
        <begin position="539"/>
        <end position="543"/>
    </location>
</feature>
<feature type="helix" evidence="54">
    <location>
        <begin position="548"/>
        <end position="550"/>
    </location>
</feature>
<feature type="helix" evidence="54">
    <location>
        <begin position="551"/>
        <end position="559"/>
    </location>
</feature>
<feature type="turn" evidence="54">
    <location>
        <begin position="570"/>
        <end position="573"/>
    </location>
</feature>
<feature type="helix" evidence="54">
    <location>
        <begin position="574"/>
        <end position="576"/>
    </location>
</feature>
<feature type="strand" evidence="54">
    <location>
        <begin position="577"/>
        <end position="579"/>
    </location>
</feature>
<feature type="strand" evidence="54">
    <location>
        <begin position="591"/>
        <end position="594"/>
    </location>
</feature>
<feature type="strand" evidence="50">
    <location>
        <begin position="611"/>
        <end position="613"/>
    </location>
</feature>
<feature type="helix" evidence="50">
    <location>
        <begin position="617"/>
        <end position="624"/>
    </location>
</feature>
<feature type="helix" evidence="54">
    <location>
        <begin position="631"/>
        <end position="637"/>
    </location>
</feature>
<feature type="strand" evidence="54">
    <location>
        <begin position="651"/>
        <end position="656"/>
    </location>
</feature>
<feature type="strand" evidence="54">
    <location>
        <begin position="661"/>
        <end position="665"/>
    </location>
</feature>
<feature type="turn" evidence="54">
    <location>
        <begin position="666"/>
        <end position="669"/>
    </location>
</feature>
<feature type="strand" evidence="54">
    <location>
        <begin position="670"/>
        <end position="678"/>
    </location>
</feature>
<feature type="helix" evidence="54">
    <location>
        <begin position="703"/>
        <end position="705"/>
    </location>
</feature>
<feature type="helix" evidence="54">
    <location>
        <begin position="707"/>
        <end position="710"/>
    </location>
</feature>
<feature type="strand" evidence="54">
    <location>
        <begin position="717"/>
        <end position="722"/>
    </location>
</feature>
<feature type="strand" evidence="54">
    <location>
        <begin position="728"/>
        <end position="732"/>
    </location>
</feature>
<feature type="helix" evidence="54">
    <location>
        <begin position="735"/>
        <end position="738"/>
    </location>
</feature>
<feature type="helix" evidence="54">
    <location>
        <begin position="740"/>
        <end position="742"/>
    </location>
</feature>
<feature type="strand" evidence="54">
    <location>
        <begin position="743"/>
        <end position="746"/>
    </location>
</feature>
<feature type="helix" evidence="54">
    <location>
        <begin position="748"/>
        <end position="759"/>
    </location>
</feature>
<feature type="helix" evidence="54">
    <location>
        <begin position="761"/>
        <end position="769"/>
    </location>
</feature>
<feature type="strand" evidence="54">
    <location>
        <begin position="772"/>
        <end position="779"/>
    </location>
</feature>
<feature type="strand" evidence="54">
    <location>
        <begin position="785"/>
        <end position="787"/>
    </location>
</feature>
<feature type="helix" evidence="54">
    <location>
        <begin position="791"/>
        <end position="796"/>
    </location>
</feature>
<feature type="strand" evidence="54">
    <location>
        <begin position="799"/>
        <end position="801"/>
    </location>
</feature>
<feature type="strand" evidence="54">
    <location>
        <begin position="804"/>
        <end position="806"/>
    </location>
</feature>
<feature type="strand" evidence="54">
    <location>
        <begin position="810"/>
        <end position="821"/>
    </location>
</feature>
<feature type="helix" evidence="50">
    <location>
        <begin position="826"/>
        <end position="828"/>
    </location>
</feature>
<feature type="strand" evidence="54">
    <location>
        <begin position="830"/>
        <end position="840"/>
    </location>
</feature>
<feature type="helix" evidence="54">
    <location>
        <begin position="846"/>
        <end position="848"/>
    </location>
</feature>
<feature type="turn" evidence="53">
    <location>
        <begin position="851"/>
        <end position="853"/>
    </location>
</feature>
<feature type="helix" evidence="54">
    <location>
        <begin position="855"/>
        <end position="865"/>
    </location>
</feature>
<feature type="helix" evidence="54">
    <location>
        <begin position="870"/>
        <end position="877"/>
    </location>
</feature>
<feature type="strand" evidence="55">
    <location>
        <begin position="885"/>
        <end position="887"/>
    </location>
</feature>
<feature type="helix" evidence="54">
    <location>
        <begin position="889"/>
        <end position="897"/>
    </location>
</feature>
<accession>P06802</accession>
<accession>Q542E9</accession>
<accession>Q924C4</accession>
<reference key="1">
    <citation type="journal article" date="1987" name="J. Biol. Chem.">
        <title>Plasma cell membrane glycoprotein PC-1. Primary structure deduced from cDNA clones.</title>
        <authorList>
            <person name="van Driel I.R."/>
            <person name="Goding J.W."/>
        </authorList>
    </citation>
    <scope>NUCLEOTIDE SEQUENCE [MRNA] (ISOFORM 1)</scope>
    <scope>SUBCELLULAR LOCATION</scope>
    <scope>TOPOLOGY</scope>
    <scope>SUBUNIT</scope>
    <source>
        <strain>BALB/cJ</strain>
    </source>
</reference>
<reference key="2">
    <citation type="submission" date="2001-01" db="EMBL/GenBank/DDBJ databases">
        <authorList>
            <person name="Goding J.W."/>
        </authorList>
    </citation>
    <scope>SEQUENCE REVISION TO 24; 46-47; 642 AND 693</scope>
</reference>
<reference key="3">
    <citation type="journal article" date="1991" name="Proc. Natl. Acad. Sci. U.S.A.">
        <title>Identification of nucleotide pyrophosphatase/alkaline phosphodiesterase I activity associated with the mouse plasma cell differentiation antigen PC-1.</title>
        <authorList>
            <person name="Rebbe N.F."/>
            <person name="Tong B.D."/>
            <person name="Finley E.M."/>
            <person name="Hickman S."/>
        </authorList>
    </citation>
    <scope>NUCLEOTIDE SEQUENCE [MRNA]</scope>
    <scope>GLYCOSYLATION</scope>
    <scope>FUNCTION</scope>
    <scope>CATALYTIC ACTIVITY</scope>
    <scope>SUBCELLULAR LOCATION</scope>
    <scope>TISSUE SPECIFICITY</scope>
    <source>
        <strain>BALB/cJ</strain>
        <tissue>Plasmacytoma</tissue>
    </source>
</reference>
<reference key="4">
    <citation type="journal article" date="2002" name="Eur. J. Immunogenet.">
        <title>Structural basis of allotypes of ecto-nucleotide pyrophosphatase/phosphodiesterase (plasma cell membrane glycoprotein PC-1) in the mouse and rat, and analysis of allele-specific xenogeneic antibodies.</title>
        <authorList>
            <person name="Banakh I."/>
            <person name="Sali A."/>
            <person name="Dubljevic V."/>
            <person name="Grobben B."/>
            <person name="Slegers H."/>
            <person name="Goding J.W."/>
        </authorList>
    </citation>
    <scope>NUCLEOTIDE SEQUENCE [MRNA] (ISOFORM 2)</scope>
    <scope>VARIANTS ARG-651 AND SER-680</scope>
    <scope>ALTERNATIVE SPLICING</scope>
</reference>
<reference key="5">
    <citation type="journal article" date="2005" name="Science">
        <title>The transcriptional landscape of the mammalian genome.</title>
        <authorList>
            <person name="Carninci P."/>
            <person name="Kasukawa T."/>
            <person name="Katayama S."/>
            <person name="Gough J."/>
            <person name="Frith M.C."/>
            <person name="Maeda N."/>
            <person name="Oyama R."/>
            <person name="Ravasi T."/>
            <person name="Lenhard B."/>
            <person name="Wells C."/>
            <person name="Kodzius R."/>
            <person name="Shimokawa K."/>
            <person name="Bajic V.B."/>
            <person name="Brenner S.E."/>
            <person name="Batalov S."/>
            <person name="Forrest A.R."/>
            <person name="Zavolan M."/>
            <person name="Davis M.J."/>
            <person name="Wilming L.G."/>
            <person name="Aidinis V."/>
            <person name="Allen J.E."/>
            <person name="Ambesi-Impiombato A."/>
            <person name="Apweiler R."/>
            <person name="Aturaliya R.N."/>
            <person name="Bailey T.L."/>
            <person name="Bansal M."/>
            <person name="Baxter L."/>
            <person name="Beisel K.W."/>
            <person name="Bersano T."/>
            <person name="Bono H."/>
            <person name="Chalk A.M."/>
            <person name="Chiu K.P."/>
            <person name="Choudhary V."/>
            <person name="Christoffels A."/>
            <person name="Clutterbuck D.R."/>
            <person name="Crowe M.L."/>
            <person name="Dalla E."/>
            <person name="Dalrymple B.P."/>
            <person name="de Bono B."/>
            <person name="Della Gatta G."/>
            <person name="di Bernardo D."/>
            <person name="Down T."/>
            <person name="Engstrom P."/>
            <person name="Fagiolini M."/>
            <person name="Faulkner G."/>
            <person name="Fletcher C.F."/>
            <person name="Fukushima T."/>
            <person name="Furuno M."/>
            <person name="Futaki S."/>
            <person name="Gariboldi M."/>
            <person name="Georgii-Hemming P."/>
            <person name="Gingeras T.R."/>
            <person name="Gojobori T."/>
            <person name="Green R.E."/>
            <person name="Gustincich S."/>
            <person name="Harbers M."/>
            <person name="Hayashi Y."/>
            <person name="Hensch T.K."/>
            <person name="Hirokawa N."/>
            <person name="Hill D."/>
            <person name="Huminiecki L."/>
            <person name="Iacono M."/>
            <person name="Ikeo K."/>
            <person name="Iwama A."/>
            <person name="Ishikawa T."/>
            <person name="Jakt M."/>
            <person name="Kanapin A."/>
            <person name="Katoh M."/>
            <person name="Kawasawa Y."/>
            <person name="Kelso J."/>
            <person name="Kitamura H."/>
            <person name="Kitano H."/>
            <person name="Kollias G."/>
            <person name="Krishnan S.P."/>
            <person name="Kruger A."/>
            <person name="Kummerfeld S.K."/>
            <person name="Kurochkin I.V."/>
            <person name="Lareau L.F."/>
            <person name="Lazarevic D."/>
            <person name="Lipovich L."/>
            <person name="Liu J."/>
            <person name="Liuni S."/>
            <person name="McWilliam S."/>
            <person name="Madan Babu M."/>
            <person name="Madera M."/>
            <person name="Marchionni L."/>
            <person name="Matsuda H."/>
            <person name="Matsuzawa S."/>
            <person name="Miki H."/>
            <person name="Mignone F."/>
            <person name="Miyake S."/>
            <person name="Morris K."/>
            <person name="Mottagui-Tabar S."/>
            <person name="Mulder N."/>
            <person name="Nakano N."/>
            <person name="Nakauchi H."/>
            <person name="Ng P."/>
            <person name="Nilsson R."/>
            <person name="Nishiguchi S."/>
            <person name="Nishikawa S."/>
            <person name="Nori F."/>
            <person name="Ohara O."/>
            <person name="Okazaki Y."/>
            <person name="Orlando V."/>
            <person name="Pang K.C."/>
            <person name="Pavan W.J."/>
            <person name="Pavesi G."/>
            <person name="Pesole G."/>
            <person name="Petrovsky N."/>
            <person name="Piazza S."/>
            <person name="Reed J."/>
            <person name="Reid J.F."/>
            <person name="Ring B.Z."/>
            <person name="Ringwald M."/>
            <person name="Rost B."/>
            <person name="Ruan Y."/>
            <person name="Salzberg S.L."/>
            <person name="Sandelin A."/>
            <person name="Schneider C."/>
            <person name="Schoenbach C."/>
            <person name="Sekiguchi K."/>
            <person name="Semple C.A."/>
            <person name="Seno S."/>
            <person name="Sessa L."/>
            <person name="Sheng Y."/>
            <person name="Shibata Y."/>
            <person name="Shimada H."/>
            <person name="Shimada K."/>
            <person name="Silva D."/>
            <person name="Sinclair B."/>
            <person name="Sperling S."/>
            <person name="Stupka E."/>
            <person name="Sugiura K."/>
            <person name="Sultana R."/>
            <person name="Takenaka Y."/>
            <person name="Taki K."/>
            <person name="Tammoja K."/>
            <person name="Tan S.L."/>
            <person name="Tang S."/>
            <person name="Taylor M.S."/>
            <person name="Tegner J."/>
            <person name="Teichmann S.A."/>
            <person name="Ueda H.R."/>
            <person name="van Nimwegen E."/>
            <person name="Verardo R."/>
            <person name="Wei C.L."/>
            <person name="Yagi K."/>
            <person name="Yamanishi H."/>
            <person name="Zabarovsky E."/>
            <person name="Zhu S."/>
            <person name="Zimmer A."/>
            <person name="Hide W."/>
            <person name="Bult C."/>
            <person name="Grimmond S.M."/>
            <person name="Teasdale R.D."/>
            <person name="Liu E.T."/>
            <person name="Brusic V."/>
            <person name="Quackenbush J."/>
            <person name="Wahlestedt C."/>
            <person name="Mattick J.S."/>
            <person name="Hume D.A."/>
            <person name="Kai C."/>
            <person name="Sasaki D."/>
            <person name="Tomaru Y."/>
            <person name="Fukuda S."/>
            <person name="Kanamori-Katayama M."/>
            <person name="Suzuki M."/>
            <person name="Aoki J."/>
            <person name="Arakawa T."/>
            <person name="Iida J."/>
            <person name="Imamura K."/>
            <person name="Itoh M."/>
            <person name="Kato T."/>
            <person name="Kawaji H."/>
            <person name="Kawagashira N."/>
            <person name="Kawashima T."/>
            <person name="Kojima M."/>
            <person name="Kondo S."/>
            <person name="Konno H."/>
            <person name="Nakano K."/>
            <person name="Ninomiya N."/>
            <person name="Nishio T."/>
            <person name="Okada M."/>
            <person name="Plessy C."/>
            <person name="Shibata K."/>
            <person name="Shiraki T."/>
            <person name="Suzuki S."/>
            <person name="Tagami M."/>
            <person name="Waki K."/>
            <person name="Watahiki A."/>
            <person name="Okamura-Oho Y."/>
            <person name="Suzuki H."/>
            <person name="Kawai J."/>
            <person name="Hayashizaki Y."/>
        </authorList>
    </citation>
    <scope>NUCLEOTIDE SEQUENCE [LARGE SCALE MRNA] (ISOFORM 1)</scope>
    <source>
        <strain>NOD</strain>
        <tissue>Thymus</tissue>
    </source>
</reference>
<reference key="6">
    <citation type="journal article" date="1993" name="Eur. J. Biochem.">
        <title>Identification and characterization of a soluble form of the plasma cell membrane glycoprotein PC-1 (5'-nucleotide phosphodiesterase).</title>
        <authorList>
            <person name="Belli S.I."/>
            <person name="van Driel I.R."/>
            <person name="Goding J.W."/>
        </authorList>
    </citation>
    <scope>NUCLEOTIDE SEQUENCE [MRNA] OF 168-188</scope>
    <scope>FUNCTION</scope>
    <scope>CATALYTIC ACTIVITY</scope>
    <scope>SUBCELLULAR LOCATION</scope>
    <scope>GLYCOSYLATION</scope>
</reference>
<reference key="7">
    <citation type="journal article" date="1985" name="Proc. Natl. Acad. Sci. U.S.A.">
        <title>Murine plasma cell membrane antigen PC-1: molecular cloning of cDNA and analysis of expression.</title>
        <authorList>
            <person name="van Driel I.R."/>
            <person name="Wilks A.F."/>
            <person name="Pietersz G.A."/>
            <person name="Goding J.W."/>
        </authorList>
    </citation>
    <scope>NUCLEOTIDE SEQUENCE [MRNA] OF 203-219</scope>
</reference>
<reference key="8">
    <citation type="journal article" date="1985" name="J. Immunol.">
        <title>The murine plasma cell antigen PC-1: purification and partial amino acid sequence.</title>
        <authorList>
            <person name="Stearne P.A."/>
            <person name="van Driel I.R."/>
            <person name="Grego B."/>
            <person name="Simpson R.J."/>
            <person name="Goding J.W."/>
        </authorList>
    </citation>
    <scope>PROTEIN SEQUENCE OF 204-219; 332-351; 486-509; 716-725; 803-818 AND 855-867</scope>
    <scope>SUBCELLULAR LOCATION</scope>
</reference>
<reference key="9">
    <citation type="journal article" date="1990" name="J. Biol. Chem.">
        <title>Plasma cell membrane glycoprotein PC-1. cDNA cloning of the human molecule, amino acid sequence, and chromosomal location.</title>
        <authorList>
            <person name="Buckley M.F."/>
            <person name="Loveland K.A."/>
            <person name="McKinstry W.J."/>
            <person name="Garson O.M."/>
            <person name="Goding J.W."/>
        </authorList>
    </citation>
    <scope>IDENTIFICATION OF POSSIBLE INITIATION SITE</scope>
</reference>
<reference key="10">
    <citation type="journal article" date="1998" name="Nat. Genet.">
        <title>Mutation in Npps in a mouse model of ossification of the posterior longitudinal ligament of the spine.</title>
        <authorList>
            <person name="Okawa A."/>
            <person name="Nakamura I."/>
            <person name="Goto S."/>
            <person name="Moriya H."/>
            <person name="Nakamura Y."/>
            <person name="Ikegawa S."/>
        </authorList>
    </citation>
    <scope>DISEASE</scope>
    <scope>FUNCTION</scope>
    <scope>VARIANT 568-GLY--ASP-906 DEL</scope>
</reference>
<reference key="11">
    <citation type="journal article" date="1999" name="J. Bone Miner. Res.">
        <title>Matrix vesicle plasma cell membrane glycoprotein-1 regulates mineralization by murine osteoblastic MC3T3 cells.</title>
        <authorList>
            <person name="Johnson K."/>
            <person name="Moffa A."/>
            <person name="Chen Y."/>
            <person name="Pritzker K."/>
            <person name="Goding J."/>
            <person name="Terkeltaub R."/>
        </authorList>
    </citation>
    <scope>FUNCTION</scope>
</reference>
<reference key="12">
    <citation type="journal article" date="2000" name="Am. J. Physiol.">
        <title>Osteoblast tissue-nonspecific alkaline phosphatase antagonizes and regulates PC-1.</title>
        <authorList>
            <person name="Johnson K.A."/>
            <person name="Hessle L."/>
            <person name="Vaingankar S."/>
            <person name="Wennberg C."/>
            <person name="Mauro S."/>
            <person name="Narisawa S."/>
            <person name="Goding J.W."/>
            <person name="Sano K."/>
            <person name="Millan J.L."/>
            <person name="Terkeltaub R."/>
        </authorList>
    </citation>
    <scope>FUNCTION</scope>
</reference>
<reference key="13">
    <citation type="journal article" date="2002" name="Proc. Natl. Acad. Sci. U.S.A.">
        <title>Tissue-nonspecific alkaline phosphatase and plasma cell membrane glycoprotein-1 are central antagonistic regulators of bone mineralization.</title>
        <authorList>
            <person name="Hessle L."/>
            <person name="Johnson K.A."/>
            <person name="Anderson H.C."/>
            <person name="Narisawa S."/>
            <person name="Sali A."/>
            <person name="Goding J.W."/>
            <person name="Terkeltaub R."/>
            <person name="Millan J.L."/>
        </authorList>
    </citation>
    <scope>FUNCTION</scope>
    <scope>DISRUPTION PHENOTYPE</scope>
</reference>
<reference key="14">
    <citation type="journal article" date="2001" name="J. Biol. Chem.">
        <title>Structural and catalytic similarities between nucleotide pyrophosphatases/phosphodiesterases and alkaline phosphatases.</title>
        <authorList>
            <person name="Gijsbers R."/>
            <person name="Ceulemans H."/>
            <person name="Stalmans W."/>
            <person name="Bollen M."/>
        </authorList>
    </citation>
    <scope>FUNCTION</scope>
    <scope>ACTIVE SITE</scope>
    <scope>METAL-BINDING</scope>
    <scope>MUTAGENESIS OF ASP-200; LYS-237; THR-238; PHE-239; ASP-358; HIS-362; ASP-405; HIS-406 AND HIS-517</scope>
    <scope>CATALYTIC ACTIVITY</scope>
</reference>
<reference key="15">
    <citation type="journal article" date="2001" name="Mol. Biol. Cell">
        <title>Characterization of a di-leucine-based signal in the cytoplasmic tail of the nucleotide-pyrophosphatase NPP1 that mediates basolateral targeting but not endocytosis.</title>
        <authorList>
            <person name="Bello V."/>
            <person name="Goding J.W."/>
            <person name="Greengrass V."/>
            <person name="Sali A."/>
            <person name="Dubljevic V."/>
            <person name="Lenoir C."/>
            <person name="Trugnan G."/>
            <person name="Maurice M."/>
        </authorList>
    </citation>
    <scope>DI-LEUCINE MOTIF</scope>
    <scope>MUTAGENESIS OF ALA-28; SER-30; LEU-31 AND LEU-32</scope>
    <scope>SUBCELLULAR LOCATION</scope>
</reference>
<reference key="16">
    <citation type="journal article" date="2003" name="Biochem. J.">
        <title>Functional characterization of the non-catalytic ectodomains of the nucleotide pyrophosphatase/phosphodiesterase NPP1.</title>
        <authorList>
            <person name="Gijsbers R."/>
            <person name="Ceulemans H."/>
            <person name="Bollen M."/>
        </authorList>
    </citation>
    <scope>DOMAIN</scope>
</reference>
<reference key="17">
    <citation type="journal article" date="2004" name="Am. J. Physiol.">
        <title>Subcellular targeting and function of osteoblast nucleotide pyrophosphatase phosphodiesterase 1.</title>
        <authorList>
            <person name="Vaingankar S.M."/>
            <person name="Fitzpatrick T.A."/>
            <person name="Johnson K."/>
            <person name="Goding J.W."/>
            <person name="Maurice M."/>
            <person name="Terkeltaub R."/>
        </authorList>
    </citation>
    <scope>DI-LEUCINE MOTIF</scope>
    <scope>MUTAGENESIS OF LEU-31; LEU-32; LEU-42 AND TYR-57</scope>
    <scope>SUBCELLULAR LOCATION</scope>
</reference>
<reference key="18">
    <citation type="journal article" date="2009" name="J. Bone Miner. Res.">
        <title>New variants in the Enpp1 and Ptpn6 genes cause low BMD, crystal-related arthropathy, and vascular calcification.</title>
        <authorList>
            <person name="Babij P."/>
            <person name="Roudier M."/>
            <person name="Graves T."/>
            <person name="Han C.Y."/>
            <person name="Chhoa M."/>
            <person name="Li C.M."/>
            <person name="Juan T."/>
            <person name="Morony S."/>
            <person name="Grisanti M."/>
            <person name="Li X."/>
            <person name="Yu L."/>
            <person name="Dwyer D."/>
            <person name="Lloyd D.J."/>
            <person name="Bass M.B."/>
            <person name="Richards W.G."/>
            <person name="Ebeling C."/>
            <person name="Amato J."/>
            <person name="Carlson G."/>
        </authorList>
    </citation>
    <scope>FUNCTION</scope>
    <scope>MUTAGENESIS OF CYS-397</scope>
</reference>
<reference key="19">
    <citation type="journal article" date="2009" name="Mol. Cell. Proteomics">
        <title>The mouse C2C12 myoblast cell surface N-linked glycoproteome: identification, glycosite occupancy, and membrane orientation.</title>
        <authorList>
            <person name="Gundry R.L."/>
            <person name="Raginski K."/>
            <person name="Tarasova Y."/>
            <person name="Tchernyshyov I."/>
            <person name="Bausch-Fluck D."/>
            <person name="Elliott S.T."/>
            <person name="Boheler K.R."/>
            <person name="Van Eyk J.E."/>
            <person name="Wollscheid B."/>
        </authorList>
    </citation>
    <scope>GLYCOSYLATION [LARGE SCALE ANALYSIS] AT ASN-267; ASN-323 AND ASN-624</scope>
    <source>
        <tissue>Myoblast</tissue>
    </source>
</reference>
<reference key="20">
    <citation type="journal article" date="2010" name="Cell">
        <title>A tissue-specific atlas of mouse protein phosphorylation and expression.</title>
        <authorList>
            <person name="Huttlin E.L."/>
            <person name="Jedrychowski M.P."/>
            <person name="Elias J.E."/>
            <person name="Goswami T."/>
            <person name="Rad R."/>
            <person name="Beausoleil S.A."/>
            <person name="Villen J."/>
            <person name="Haas W."/>
            <person name="Sowa M.E."/>
            <person name="Gygi S.P."/>
        </authorList>
    </citation>
    <scope>IDENTIFICATION BY MASS SPECTROMETRY [LARGE SCALE ANALYSIS]</scope>
    <source>
        <tissue>Heart</tissue>
        <tissue>Kidney</tissue>
        <tissue>Liver</tissue>
        <tissue>Pancreas</tissue>
        <tissue>Spleen</tissue>
        <tissue>Testis</tissue>
    </source>
</reference>
<reference key="21">
    <citation type="journal article" date="2012" name="Ann. Rheum. Dis.">
        <title>Decreased levels of nucleotide pyrophosphatase phosphodiesterase 1 are associated with cartilage calcification in osteoarthritis and trigger osteoarthritic changes in mice.</title>
        <authorList>
            <person name="Bertrand J."/>
            <person name="Nitschke Y."/>
            <person name="Fuerst M."/>
            <person name="Hermann S."/>
            <person name="Schaefers M."/>
            <person name="Sherwood J."/>
            <person name="Nalesso G."/>
            <person name="Ruether W."/>
            <person name="Rutsch F."/>
            <person name="Dell'Accio F."/>
            <person name="Pap T."/>
        </authorList>
    </citation>
    <scope>FUNCTION</scope>
    <scope>DISEASE</scope>
</reference>
<reference key="22">
    <citation type="journal article" date="2014" name="Bone">
        <title>Mineralisation of collagen rich soft tissues and osteocyte lacunae in Enpp1(-/-) mice.</title>
        <authorList>
            <person name="Hajjawi M.O."/>
            <person name="MacRae V.E."/>
            <person name="Huesa C."/>
            <person name="Boyde A."/>
            <person name="Millan J.L."/>
            <person name="Arnett T.R."/>
            <person name="Orriss I.R."/>
        </authorList>
    </citation>
    <scope>FUNCTION</scope>
    <scope>DISRUPTION PHENOTYPE</scope>
</reference>
<reference key="23">
    <citation type="journal article" date="2014" name="Nat. Chem. Biol.">
        <title>Hydrolysis of 2'3'-cGAMP by ENPP1 and design of nonhydrolyzable analogs.</title>
        <authorList>
            <person name="Li L."/>
            <person name="Yin Q."/>
            <person name="Kuss P."/>
            <person name="Maliga Z."/>
            <person name="Millan J.L."/>
            <person name="Wu H."/>
            <person name="Mitchison T.J."/>
        </authorList>
    </citation>
    <scope>FUNCTION</scope>
</reference>
<reference key="24">
    <citation type="journal article" date="2014" name="PLoS ONE">
        <title>Spontaneous asj-2J mutant mouse as a model for generalized arterial calcification of infancy: a large deletion/insertion mutation in the Enpp1 gene.</title>
        <authorList>
            <person name="Li Q."/>
            <person name="Pratt C.H."/>
            <person name="Dionne L.A."/>
            <person name="Fairfield H."/>
            <person name="Karst S.Y."/>
            <person name="Sundberg J.P."/>
            <person name="Uitto J."/>
        </authorList>
    </citation>
    <scope>DISEASE</scope>
    <scope>FUNCTION</scope>
</reference>
<reference key="25">
    <citation type="journal article" date="2016" name="Oncotarget">
        <title>Ectopic mineralization of cartilage and collagen-rich tendons and ligaments in Enpp1asj-2J mice.</title>
        <authorList>
            <person name="Zhang J."/>
            <person name="Dyment N.A."/>
            <person name="Rowe D.W."/>
            <person name="Siu S.Y."/>
            <person name="Sundberg J.P."/>
            <person name="Uitto J."/>
            <person name="Li Q."/>
        </authorList>
    </citation>
    <scope>DISEASE</scope>
    <scope>FUNCTION</scope>
</reference>
<reference key="26">
    <citation type="journal article" date="2018" name="Development">
        <title>Enpp1 inhibits ectopic joint calcification and maintains articular chondrocytes by repressing hedgehog signaling.</title>
        <authorList>
            <person name="Jin Y."/>
            <person name="Cong Q."/>
            <person name="Gvozdenovic-Jeremic J."/>
            <person name="Hu J."/>
            <person name="Zhang Y."/>
            <person name="Terkeltaub R."/>
            <person name="Yang Y."/>
        </authorList>
    </citation>
    <scope>FUNCTION</scope>
    <scope>DISRUPTION PHENOTYPE</scope>
</reference>
<reference key="27">
    <citation type="journal article" date="2022" name="J. Bone Miner. Res.">
        <title>The Mineralization Regulator ANKH Mediates Cellular Efflux of ATP, Not Pyrophosphate.</title>
        <authorList>
            <person name="Szeri F."/>
            <person name="Niaziorimi F."/>
            <person name="Donnelly S."/>
            <person name="Fariha N."/>
            <person name="Tertyshnaia M."/>
            <person name="Patel D."/>
            <person name="Lundkvist S."/>
            <person name="van de Wetering K."/>
        </authorList>
    </citation>
    <scope>FUNCTION</scope>
    <scope>DISRUPTION PHENOTYPE</scope>
</reference>
<reference evidence="44 45 46 47" key="28">
    <citation type="journal article" date="2012" name="Proc. Natl. Acad. Sci. U.S.A.">
        <title>Crystal structure of Enpp1, an extracellular glycoprotein involved in bone mineralization and insulin signaling.</title>
        <authorList>
            <person name="Kato K."/>
            <person name="Nishimasu H."/>
            <person name="Okudaira S."/>
            <person name="Mihara E."/>
            <person name="Ishitani R."/>
            <person name="Takagi J."/>
            <person name="Aoki J."/>
            <person name="Nureki O."/>
        </authorList>
    </citation>
    <scope>X-RAY CRYSTALLOGRAPHY (2.70 ANGSTROMS) OF 92-906 IN COMPLEXES WITH AMP; CMP; GMP; TMP; CALCIUM AND ZINC</scope>
    <scope>GLYCOSYLATION AT ASN-267; ASN-323 AND ASN-567</scope>
    <scope>DISULFIDE BOND</scope>
    <scope>FUNCTION</scope>
    <scope>CATALYTIC ACTIVITY</scope>
    <scope>SUBSTRATE SPECIFICITY</scope>
    <scope>BIOPHYSICOCHEMICAL PROPERTIES</scope>
    <scope>MUTAGENESIS OF PHE-239; HIS-242; 304-TRP--ASN-323; ASP-308 AND TYR-322</scope>
    <scope>COFACTOR</scope>
</reference>
<reference evidence="43" key="29">
    <citation type="journal article" date="2012" name="Structure">
        <title>Structure of NPP1, an ectonucleotide pyrophosphatase/ phosphodiesterase involved in tissue calcification.</title>
        <authorList>
            <person name="Jansen S."/>
            <person name="Perrakis A."/>
            <person name="Ulens C."/>
            <person name="Winkler C."/>
            <person name="Andries M."/>
            <person name="Joosten R.P."/>
            <person name="Van Acker M."/>
            <person name="Luyten F.P."/>
            <person name="Moolenaar W.H."/>
            <person name="Bollen M."/>
        </authorList>
    </citation>
    <scope>X-RAY CRYSTALLOGRAPHY (3.0 ANGSTROMS) OF 87-906 IN COMPLEX WITH CALCIUM; PHOSPHATE AND ZINC</scope>
    <scope>DISULFIDE BONDS</scope>
    <scope>METAL-BINDING SITES</scope>
    <scope>SUBUNIT</scope>
    <scope>SUBCELLULAR LOCATION</scope>
    <scope>GLYCOSYLATION AT ASN-323; ASN-459; ASN-567 AND ASN-624</scope>
    <scope>COFACTOR</scope>
    <scope>PROTEOLYTIC CLEAVAGE</scope>
</reference>
<reference evidence="48 49" key="30">
    <citation type="journal article" date="2018" name="Nat. Commun.">
        <title>Structural insights into cGAMP degradation by Ecto-nucleotide pyrophosphatase phosphodiesterase 1.</title>
        <authorList>
            <person name="Kato K."/>
            <person name="Nishimasu H."/>
            <person name="Oikawa D."/>
            <person name="Hirano S."/>
            <person name="Hirano H."/>
            <person name="Kasuya G."/>
            <person name="Ishitani R."/>
            <person name="Tokunaga F."/>
            <person name="Nureki O."/>
        </authorList>
    </citation>
    <scope>X-RAY CRYSTALLOGRAPHY (1.8 ANGSTROMS) OF 190-578 AND 629-902 IN COMPLEX WITH 3'3'-CGAMP AND ZINC</scope>
    <scope>CATALYTIC ACTIVITY</scope>
    <scope>MUTAGENESIS OF THR-238 AND SER-514</scope>
</reference>
<sequence>MERDGDQAGHGPRHGSAGNGRELESPAAASLLAPMDLGEEPLEKAERARPAKDPNTYKVLSLVLSVCVLTTILGCIFGLKPSCAKEVKSCKGRCFERTFSNCRCDAACVSLGNCCLDFQETCVEPTHIWTCNKFRCGEKRLSRFVCSCADDCKTHNDCCINYSSVCQDKKSWVEETCESIDTPECPAEFESPPTLLFSLDGFRAEYLHTWGGLLPVISKLKNCGTYTKNMRPMYPTKTFPNHYSIVTGLYPESHGIIDNKMYDPKMNASFSLKSKEKFNPLWYKGQPIWVTANHQEVKSGTYFWPGSDVEIDGILPDIYKVYNGSVPFEERILAVLEWLQLPSHERPHFYTLYLEEPDSSGHSHGPVSSEVIKALQKVDRLVGMLMDGLKDLGLDKCLNLILISDHGMEQGSCKKYVYLNKYLGDVNNVKVVYGPAARLRPTDVPETYYSFNYEALAKNLSCREPNQHFRPYLKPFLPKRLHFAKSDRIEPLTFYLDPQWQLALNPSERKYCGSGFHGSDNLFSNMQALFIGYGPAFKHGAEVDSFENIEVYNLMCDLLGLIPAPNNGSHGSLNHLLKKPIYNPSHPKEEGFLSQCPIKSTSNDLGCTCDPWIVPIKDFEKQLNLTTEDVDDIYHMTVPYGRPRILLKQHHVCLLQQQQFLTGYSLDLLMPLWASYTFLRNDQFSRDDFSNCLYQDLRIPLSPVHKCSYYKSNSKLSYGFLTPPRLNRVSNHIYSEALLTSNIVPMYQSFQVIWHYLHDTLLQRYAHERNGINVVSGPVFDFDYDGRYDSLEILKQNSRVIRSQEILIPTHFFIVLTSCKQLSETPLECSALESSAYILPHRPDNIESCTHGKRESSWVEELLTLHRARVTDVELITGLSFYQDRQESVSELLRLKTHLPIFSQED</sequence>
<gene>
    <name evidence="33 40" type="primary">Enpp1</name>
    <name evidence="35" type="synonym">Npps</name>
    <name evidence="34" type="synonym">Pc1</name>
    <name type="synonym">Pdnp1</name>
</gene>
<dbReference type="EC" id="3.1.4.1" evidence="9 15 19 30"/>
<dbReference type="EC" id="3.6.1.9" evidence="9 15 19 30"/>
<dbReference type="EMBL" id="J02700">
    <property type="protein sequence ID" value="AAA39893.2"/>
    <property type="molecule type" value="mRNA"/>
</dbReference>
<dbReference type="EMBL" id="AF339910">
    <property type="protein sequence ID" value="AAK84174.1"/>
    <property type="molecule type" value="mRNA"/>
</dbReference>
<dbReference type="EMBL" id="AK088857">
    <property type="protein sequence ID" value="BAC40616.1"/>
    <property type="molecule type" value="mRNA"/>
</dbReference>
<dbReference type="EMBL" id="L04516">
    <property type="status" value="NOT_ANNOTATED_CDS"/>
    <property type="molecule type" value="Unassigned_DNA"/>
</dbReference>
<dbReference type="EMBL" id="M12552">
    <property type="protein sequence ID" value="AAA39892.1"/>
    <property type="molecule type" value="mRNA"/>
</dbReference>
<dbReference type="CCDS" id="CCDS35870.1">
    <molecule id="P06802-2"/>
</dbReference>
<dbReference type="CCDS" id="CCDS78802.1">
    <molecule id="P06802-1"/>
</dbReference>
<dbReference type="PIR" id="A27410">
    <property type="entry name" value="A27410"/>
</dbReference>
<dbReference type="RefSeq" id="NP_001295256.1">
    <property type="nucleotide sequence ID" value="NM_001308327.1"/>
</dbReference>
<dbReference type="PDB" id="4B56">
    <property type="method" value="X-ray"/>
    <property type="resolution" value="3.00 A"/>
    <property type="chains" value="A/B=87-906"/>
</dbReference>
<dbReference type="PDB" id="4GTW">
    <property type="method" value="X-ray"/>
    <property type="resolution" value="2.70 A"/>
    <property type="chains" value="A/B=92-906"/>
</dbReference>
<dbReference type="PDB" id="4GTX">
    <property type="method" value="X-ray"/>
    <property type="resolution" value="3.20 A"/>
    <property type="chains" value="A/B=92-906"/>
</dbReference>
<dbReference type="PDB" id="4GTY">
    <property type="method" value="X-ray"/>
    <property type="resolution" value="3.19 A"/>
    <property type="chains" value="A/B=92-906"/>
</dbReference>
<dbReference type="PDB" id="4GTZ">
    <property type="method" value="X-ray"/>
    <property type="resolution" value="3.19 A"/>
    <property type="chains" value="A/B=92-906"/>
</dbReference>
<dbReference type="PDB" id="6AEK">
    <property type="method" value="X-ray"/>
    <property type="resolution" value="1.80 A"/>
    <property type="chains" value="A=170-906"/>
</dbReference>
<dbReference type="PDB" id="6AEL">
    <property type="method" value="X-ray"/>
    <property type="resolution" value="1.90 A"/>
    <property type="chains" value="A=170-906"/>
</dbReference>
<dbReference type="PDB" id="6XKD">
    <property type="method" value="X-ray"/>
    <property type="resolution" value="3.20 A"/>
    <property type="chains" value="A/B=92-906"/>
</dbReference>
<dbReference type="PDBsum" id="4B56"/>
<dbReference type="PDBsum" id="4GTW"/>
<dbReference type="PDBsum" id="4GTX"/>
<dbReference type="PDBsum" id="4GTY"/>
<dbReference type="PDBsum" id="4GTZ"/>
<dbReference type="PDBsum" id="6AEK"/>
<dbReference type="PDBsum" id="6AEL"/>
<dbReference type="PDBsum" id="6XKD"/>
<dbReference type="SMR" id="P06802"/>
<dbReference type="BioGRID" id="202097">
    <property type="interactions" value="4"/>
</dbReference>
<dbReference type="DIP" id="DIP-59981N"/>
<dbReference type="FunCoup" id="P06802">
    <property type="interactions" value="367"/>
</dbReference>
<dbReference type="STRING" id="10090.ENSMUSP00000114273"/>
<dbReference type="BindingDB" id="P06802"/>
<dbReference type="GlyConnect" id="2414">
    <molecule id="P06802-2"/>
    <property type="glycosylation" value="1 N-Linked glycan (1 site)"/>
</dbReference>
<dbReference type="GlyCosmos" id="P06802">
    <property type="glycosylation" value="6 sites, 1 glycan"/>
</dbReference>
<dbReference type="GlyGen" id="P06802">
    <property type="glycosylation" value="7 sites, 4 N-linked glycans (4 sites), 1 O-linked glycan (1 site)"/>
</dbReference>
<dbReference type="iPTMnet" id="P06802"/>
<dbReference type="PhosphoSitePlus" id="P06802"/>
<dbReference type="SwissPalm" id="P06802"/>
<dbReference type="CPTAC" id="non-CPTAC-4032"/>
<dbReference type="jPOST" id="P06802"/>
<dbReference type="PaxDb" id="10090-ENSMUSP00000101159"/>
<dbReference type="ProteomicsDB" id="275869">
    <molecule id="P06802-1"/>
</dbReference>
<dbReference type="ProteomicsDB" id="275870">
    <molecule id="P06802-2"/>
</dbReference>
<dbReference type="Pumba" id="P06802"/>
<dbReference type="DNASU" id="18605"/>
<dbReference type="GeneID" id="18605"/>
<dbReference type="KEGG" id="mmu:18605"/>
<dbReference type="AGR" id="MGI:97370"/>
<dbReference type="CTD" id="5167"/>
<dbReference type="MGI" id="MGI:97370">
    <property type="gene designation" value="Enpp1"/>
</dbReference>
<dbReference type="eggNOG" id="KOG2645">
    <property type="taxonomic scope" value="Eukaryota"/>
</dbReference>
<dbReference type="InParanoid" id="P06802"/>
<dbReference type="OrthoDB" id="415411at2759"/>
<dbReference type="PhylomeDB" id="P06802"/>
<dbReference type="BRENDA" id="3.1.4.1">
    <property type="organism ID" value="3474"/>
</dbReference>
<dbReference type="BRENDA" id="3.6.1.9">
    <property type="organism ID" value="3474"/>
</dbReference>
<dbReference type="Reactome" id="R-MMU-196843">
    <property type="pathway name" value="Vitamin B2 (riboflavin) metabolism"/>
</dbReference>
<dbReference type="SABIO-RK" id="P06802"/>
<dbReference type="BioGRID-ORCS" id="18605">
    <property type="hits" value="3 hits in 77 CRISPR screens"/>
</dbReference>
<dbReference type="ChiTaRS" id="Enpp1">
    <property type="organism name" value="mouse"/>
</dbReference>
<dbReference type="EvolutionaryTrace" id="P06802"/>
<dbReference type="PRO" id="PR:P06802"/>
<dbReference type="Proteomes" id="UP000000589">
    <property type="component" value="Unplaced"/>
</dbReference>
<dbReference type="RNAct" id="P06802">
    <property type="molecule type" value="protein"/>
</dbReference>
<dbReference type="GO" id="GO:0016323">
    <property type="term" value="C:basolateral plasma membrane"/>
    <property type="evidence" value="ECO:0007669"/>
    <property type="project" value="UniProtKB-SubCell"/>
</dbReference>
<dbReference type="GO" id="GO:0009986">
    <property type="term" value="C:cell surface"/>
    <property type="evidence" value="ECO:0000314"/>
    <property type="project" value="BHF-UCL"/>
</dbReference>
<dbReference type="GO" id="GO:0005576">
    <property type="term" value="C:extracellular region"/>
    <property type="evidence" value="ECO:0000315"/>
    <property type="project" value="MGI"/>
</dbReference>
<dbReference type="GO" id="GO:0005615">
    <property type="term" value="C:extracellular space"/>
    <property type="evidence" value="ECO:0000314"/>
    <property type="project" value="BHF-UCL"/>
</dbReference>
<dbReference type="GO" id="GO:0016020">
    <property type="term" value="C:membrane"/>
    <property type="evidence" value="ECO:0000314"/>
    <property type="project" value="UniProtKB"/>
</dbReference>
<dbReference type="GO" id="GO:0005886">
    <property type="term" value="C:plasma membrane"/>
    <property type="evidence" value="ECO:0000314"/>
    <property type="project" value="UniProtKB"/>
</dbReference>
<dbReference type="GO" id="GO:0004115">
    <property type="term" value="F:3',5'-cyclic-AMP phosphodiesterase activity"/>
    <property type="evidence" value="ECO:0007669"/>
    <property type="project" value="RHEA"/>
</dbReference>
<dbReference type="GO" id="GO:0047693">
    <property type="term" value="F:ATP diphosphatase activity"/>
    <property type="evidence" value="ECO:0007669"/>
    <property type="project" value="RHEA"/>
</dbReference>
<dbReference type="GO" id="GO:0005509">
    <property type="term" value="F:calcium ion binding"/>
    <property type="evidence" value="ECO:0000314"/>
    <property type="project" value="UniProtKB"/>
</dbReference>
<dbReference type="GO" id="GO:0010945">
    <property type="term" value="F:coenzyme A diphosphatase activity"/>
    <property type="evidence" value="ECO:0000304"/>
    <property type="project" value="MGI"/>
</dbReference>
<dbReference type="GO" id="GO:0106177">
    <property type="term" value="F:cyclic-GMP-AMP hydrolase activity"/>
    <property type="evidence" value="ECO:0000314"/>
    <property type="project" value="UniProtKB"/>
</dbReference>
<dbReference type="GO" id="GO:0004551">
    <property type="term" value="F:dinucleotide phosphatase activity"/>
    <property type="evidence" value="ECO:0000314"/>
    <property type="project" value="UniProtKB"/>
</dbReference>
<dbReference type="GO" id="GO:0036219">
    <property type="term" value="F:GTP diphosphatase activity"/>
    <property type="evidence" value="ECO:0007669"/>
    <property type="project" value="RHEA"/>
</dbReference>
<dbReference type="GO" id="GO:0042802">
    <property type="term" value="F:identical protein binding"/>
    <property type="evidence" value="ECO:0000353"/>
    <property type="project" value="IntAct"/>
</dbReference>
<dbReference type="GO" id="GO:0003676">
    <property type="term" value="F:nucleic acid binding"/>
    <property type="evidence" value="ECO:0007669"/>
    <property type="project" value="InterPro"/>
</dbReference>
<dbReference type="GO" id="GO:0047429">
    <property type="term" value="F:nucleoside triphosphate diphosphatase activity"/>
    <property type="evidence" value="ECO:0000314"/>
    <property type="project" value="UniProtKB"/>
</dbReference>
<dbReference type="GO" id="GO:0016791">
    <property type="term" value="F:phosphatase activity"/>
    <property type="evidence" value="ECO:0000314"/>
    <property type="project" value="MGI"/>
</dbReference>
<dbReference type="GO" id="GO:0004528">
    <property type="term" value="F:phosphodiesterase I activity"/>
    <property type="evidence" value="ECO:0000314"/>
    <property type="project" value="UniProtKB"/>
</dbReference>
<dbReference type="GO" id="GO:0008081">
    <property type="term" value="F:phosphoric diester hydrolase activity"/>
    <property type="evidence" value="ECO:0000314"/>
    <property type="project" value="MGI"/>
</dbReference>
<dbReference type="GO" id="GO:0030247">
    <property type="term" value="F:polysaccharide binding"/>
    <property type="evidence" value="ECO:0007669"/>
    <property type="project" value="InterPro"/>
</dbReference>
<dbReference type="GO" id="GO:0042803">
    <property type="term" value="F:protein homodimerization activity"/>
    <property type="evidence" value="ECO:0000314"/>
    <property type="project" value="MGI"/>
</dbReference>
<dbReference type="GO" id="GO:0016462">
    <property type="term" value="F:pyrophosphatase activity"/>
    <property type="evidence" value="ECO:0000314"/>
    <property type="project" value="MGI"/>
</dbReference>
<dbReference type="GO" id="GO:0005044">
    <property type="term" value="F:scavenger receptor activity"/>
    <property type="evidence" value="ECO:0007669"/>
    <property type="project" value="InterPro"/>
</dbReference>
<dbReference type="GO" id="GO:0036221">
    <property type="term" value="F:UTP diphosphatase activity"/>
    <property type="evidence" value="ECO:0007669"/>
    <property type="project" value="RHEA"/>
</dbReference>
<dbReference type="GO" id="GO:0008270">
    <property type="term" value="F:zinc ion binding"/>
    <property type="evidence" value="ECO:0000314"/>
    <property type="project" value="UniProtKB"/>
</dbReference>
<dbReference type="GO" id="GO:0060612">
    <property type="term" value="P:adipose tissue development"/>
    <property type="evidence" value="ECO:0000315"/>
    <property type="project" value="MGI"/>
</dbReference>
<dbReference type="GO" id="GO:0008344">
    <property type="term" value="P:adult locomotory behavior"/>
    <property type="evidence" value="ECO:0000315"/>
    <property type="project" value="MGI"/>
</dbReference>
<dbReference type="GO" id="GO:0007628">
    <property type="term" value="P:adult walking behavior"/>
    <property type="evidence" value="ECO:0000315"/>
    <property type="project" value="MGI"/>
</dbReference>
<dbReference type="GO" id="GO:0035904">
    <property type="term" value="P:aorta development"/>
    <property type="evidence" value="ECO:0000315"/>
    <property type="project" value="MGI"/>
</dbReference>
<dbReference type="GO" id="GO:1902742">
    <property type="term" value="P:apoptotic process involved in development"/>
    <property type="evidence" value="ECO:0000315"/>
    <property type="project" value="MGI"/>
</dbReference>
<dbReference type="GO" id="GO:0060840">
    <property type="term" value="P:artery development"/>
    <property type="evidence" value="ECO:0000315"/>
    <property type="project" value="MGI"/>
</dbReference>
<dbReference type="GO" id="GO:0061975">
    <property type="term" value="P:articular cartilage development"/>
    <property type="evidence" value="ECO:0000315"/>
    <property type="project" value="MGI"/>
</dbReference>
<dbReference type="GO" id="GO:0046034">
    <property type="term" value="P:ATP metabolic process"/>
    <property type="evidence" value="ECO:0000314"/>
    <property type="project" value="UniProtKB"/>
</dbReference>
<dbReference type="GO" id="GO:0031103">
    <property type="term" value="P:axon regeneration"/>
    <property type="evidence" value="ECO:0000315"/>
    <property type="project" value="MGI"/>
</dbReference>
<dbReference type="GO" id="GO:0001922">
    <property type="term" value="P:B-1 B cell homeostasis"/>
    <property type="evidence" value="ECO:0000315"/>
    <property type="project" value="MGI"/>
</dbReference>
<dbReference type="GO" id="GO:0031214">
    <property type="term" value="P:biomineral tissue development"/>
    <property type="evidence" value="ECO:0000315"/>
    <property type="project" value="MGI"/>
</dbReference>
<dbReference type="GO" id="GO:0060348">
    <property type="term" value="P:bone development"/>
    <property type="evidence" value="ECO:0000315"/>
    <property type="project" value="MGI"/>
</dbReference>
<dbReference type="GO" id="GO:0098868">
    <property type="term" value="P:bone growth"/>
    <property type="evidence" value="ECO:0000315"/>
    <property type="project" value="MGI"/>
</dbReference>
<dbReference type="GO" id="GO:0030282">
    <property type="term" value="P:bone mineralization"/>
    <property type="evidence" value="ECO:0000314"/>
    <property type="project" value="MGI"/>
</dbReference>
<dbReference type="GO" id="GO:0035630">
    <property type="term" value="P:bone mineralization involved in bone maturation"/>
    <property type="evidence" value="ECO:0000315"/>
    <property type="project" value="MGI"/>
</dbReference>
<dbReference type="GO" id="GO:0046849">
    <property type="term" value="P:bone remodeling"/>
    <property type="evidence" value="ECO:0000315"/>
    <property type="project" value="MGI"/>
</dbReference>
<dbReference type="GO" id="GO:0045453">
    <property type="term" value="P:bone resorption"/>
    <property type="evidence" value="ECO:0000315"/>
    <property type="project" value="MGI"/>
</dbReference>
<dbReference type="GO" id="GO:0060346">
    <property type="term" value="P:bone trabecula formation"/>
    <property type="evidence" value="ECO:0000315"/>
    <property type="project" value="MGI"/>
</dbReference>
<dbReference type="GO" id="GO:0055074">
    <property type="term" value="P:calcium ion homeostasis"/>
    <property type="evidence" value="ECO:0000315"/>
    <property type="project" value="MGI"/>
</dbReference>
<dbReference type="GO" id="GO:0051216">
    <property type="term" value="P:cartilage development"/>
    <property type="evidence" value="ECO:0000315"/>
    <property type="project" value="MGI"/>
</dbReference>
<dbReference type="GO" id="GO:0000902">
    <property type="term" value="P:cell morphogenesis"/>
    <property type="evidence" value="ECO:0000314"/>
    <property type="project" value="MGI"/>
</dbReference>
<dbReference type="GO" id="GO:0008283">
    <property type="term" value="P:cell population proliferation"/>
    <property type="evidence" value="ECO:0000315"/>
    <property type="project" value="MGI"/>
</dbReference>
<dbReference type="GO" id="GO:0019725">
    <property type="term" value="P:cellular homeostasis"/>
    <property type="evidence" value="ECO:0000315"/>
    <property type="project" value="MGI"/>
</dbReference>
<dbReference type="GO" id="GO:1904384">
    <property type="term" value="P:cellular response to sodium phosphate"/>
    <property type="evidence" value="ECO:0000315"/>
    <property type="project" value="MGI"/>
</dbReference>
<dbReference type="GO" id="GO:0071529">
    <property type="term" value="P:cementum mineralization"/>
    <property type="evidence" value="ECO:0000314"/>
    <property type="project" value="MGI"/>
</dbReference>
<dbReference type="GO" id="GO:0022010">
    <property type="term" value="P:central nervous system myelination"/>
    <property type="evidence" value="ECO:0000315"/>
    <property type="project" value="MGI"/>
</dbReference>
<dbReference type="GO" id="GO:0015938">
    <property type="term" value="P:coenzyme A catabolic process"/>
    <property type="evidence" value="ECO:0000266"/>
    <property type="project" value="MGI"/>
</dbReference>
<dbReference type="GO" id="GO:0038065">
    <property type="term" value="P:collagen-activated signaling pathway"/>
    <property type="evidence" value="ECO:0000315"/>
    <property type="project" value="MGI"/>
</dbReference>
<dbReference type="GO" id="GO:0046323">
    <property type="term" value="P:D-glucose import"/>
    <property type="evidence" value="ECO:0000315"/>
    <property type="project" value="MGI"/>
</dbReference>
<dbReference type="GO" id="GO:0042832">
    <property type="term" value="P:defense response to protozoan"/>
    <property type="evidence" value="ECO:0000315"/>
    <property type="project" value="MGI"/>
</dbReference>
<dbReference type="GO" id="GO:0008340">
    <property type="term" value="P:determination of adult lifespan"/>
    <property type="evidence" value="ECO:0000315"/>
    <property type="project" value="MGI"/>
</dbReference>
<dbReference type="GO" id="GO:0071344">
    <property type="term" value="P:diphosphate metabolic process"/>
    <property type="evidence" value="ECO:0000314"/>
    <property type="project" value="MGI"/>
</dbReference>
<dbReference type="GO" id="GO:0060350">
    <property type="term" value="P:endochondral bone morphogenesis"/>
    <property type="evidence" value="ECO:0000315"/>
    <property type="project" value="MGI"/>
</dbReference>
<dbReference type="GO" id="GO:0001958">
    <property type="term" value="P:endochondral ossification"/>
    <property type="evidence" value="ECO:0000315"/>
    <property type="project" value="MGI"/>
</dbReference>
<dbReference type="GO" id="GO:0051649">
    <property type="term" value="P:establishment of localization in cell"/>
    <property type="evidence" value="ECO:0000315"/>
    <property type="project" value="MGI"/>
</dbReference>
<dbReference type="GO" id="GO:0045444">
    <property type="term" value="P:fat cell differentiation"/>
    <property type="evidence" value="ECO:0000315"/>
    <property type="project" value="MGI"/>
</dbReference>
<dbReference type="GO" id="GO:0060613">
    <property type="term" value="P:fat pad development"/>
    <property type="evidence" value="ECO:0000315"/>
    <property type="project" value="MGI"/>
</dbReference>
<dbReference type="GO" id="GO:0006631">
    <property type="term" value="P:fatty acid metabolic process"/>
    <property type="evidence" value="ECO:0000315"/>
    <property type="project" value="MGI"/>
</dbReference>
<dbReference type="GO" id="GO:0008543">
    <property type="term" value="P:fibroblast growth factor receptor signaling pathway"/>
    <property type="evidence" value="ECO:0000315"/>
    <property type="project" value="MGI"/>
</dbReference>
<dbReference type="GO" id="GO:0010467">
    <property type="term" value="P:gene expression"/>
    <property type="evidence" value="ECO:0000314"/>
    <property type="project" value="MGI"/>
</dbReference>
<dbReference type="GO" id="GO:0042593">
    <property type="term" value="P:glucose homeostasis"/>
    <property type="evidence" value="ECO:0000315"/>
    <property type="project" value="MGI"/>
</dbReference>
<dbReference type="GO" id="GO:0006096">
    <property type="term" value="P:glycolytic process"/>
    <property type="evidence" value="ECO:0000315"/>
    <property type="project" value="MGI"/>
</dbReference>
<dbReference type="GO" id="GO:0007507">
    <property type="term" value="P:heart development"/>
    <property type="evidence" value="ECO:0000315"/>
    <property type="project" value="MGI"/>
</dbReference>
<dbReference type="GO" id="GO:0097241">
    <property type="term" value="P:hematopoietic stem cell migration to bone marrow"/>
    <property type="evidence" value="ECO:0000315"/>
    <property type="project" value="MGI"/>
</dbReference>
<dbReference type="GO" id="GO:0042445">
    <property type="term" value="P:hormone metabolic process"/>
    <property type="evidence" value="ECO:0000315"/>
    <property type="project" value="MGI"/>
</dbReference>
<dbReference type="GO" id="GO:0002437">
    <property type="term" value="P:inflammatory response to antigenic stimulus"/>
    <property type="evidence" value="ECO:0000315"/>
    <property type="project" value="MGI"/>
</dbReference>
<dbReference type="GO" id="GO:0140928">
    <property type="term" value="P:inhibition of non-skeletal tissue mineralization"/>
    <property type="evidence" value="ECO:0000314"/>
    <property type="project" value="MGI"/>
</dbReference>
<dbReference type="GO" id="GO:0030505">
    <property type="term" value="P:inorganic diphosphate transport"/>
    <property type="evidence" value="ECO:0000314"/>
    <property type="project" value="MGI"/>
</dbReference>
<dbReference type="GO" id="GO:0001822">
    <property type="term" value="P:kidney development"/>
    <property type="evidence" value="ECO:0000315"/>
    <property type="project" value="MGI"/>
</dbReference>
<dbReference type="GO" id="GO:0002269">
    <property type="term" value="P:leukocyte activation involved in inflammatory response"/>
    <property type="evidence" value="ECO:0000315"/>
    <property type="project" value="MGI"/>
</dbReference>
<dbReference type="GO" id="GO:0036076">
    <property type="term" value="P:ligamentous ossification"/>
    <property type="evidence" value="ECO:0000315"/>
    <property type="project" value="MGI"/>
</dbReference>
<dbReference type="GO" id="GO:0060291">
    <property type="term" value="P:long-term synaptic potentiation"/>
    <property type="evidence" value="ECO:0000315"/>
    <property type="project" value="MGI"/>
</dbReference>
<dbReference type="GO" id="GO:0030225">
    <property type="term" value="P:macrophage differentiation"/>
    <property type="evidence" value="ECO:0000315"/>
    <property type="project" value="MGI"/>
</dbReference>
<dbReference type="GO" id="GO:0010960">
    <property type="term" value="P:magnesium ion homeostasis"/>
    <property type="evidence" value="ECO:0000315"/>
    <property type="project" value="MGI"/>
</dbReference>
<dbReference type="GO" id="GO:0014004">
    <property type="term" value="P:microglia differentiation"/>
    <property type="evidence" value="ECO:0000315"/>
    <property type="project" value="MGI"/>
</dbReference>
<dbReference type="GO" id="GO:1904124">
    <property type="term" value="P:microglial cell migration"/>
    <property type="evidence" value="ECO:0000315"/>
    <property type="project" value="MGI"/>
</dbReference>
<dbReference type="GO" id="GO:0042474">
    <property type="term" value="P:middle ear morphogenesis"/>
    <property type="evidence" value="ECO:0000315"/>
    <property type="project" value="MGI"/>
</dbReference>
<dbReference type="GO" id="GO:0007005">
    <property type="term" value="P:mitochondrion organization"/>
    <property type="evidence" value="ECO:0000315"/>
    <property type="project" value="MGI"/>
</dbReference>
<dbReference type="GO" id="GO:0002009">
    <property type="term" value="P:morphogenesis of an epithelium"/>
    <property type="evidence" value="ECO:0000315"/>
    <property type="project" value="MGI"/>
</dbReference>
<dbReference type="GO" id="GO:0042789">
    <property type="term" value="P:mRNA transcription by RNA polymerase II"/>
    <property type="evidence" value="ECO:0000315"/>
    <property type="project" value="MGI"/>
</dbReference>
<dbReference type="GO" id="GO:0070254">
    <property type="term" value="P:mucus secretion"/>
    <property type="evidence" value="ECO:0000315"/>
    <property type="project" value="MGI"/>
</dbReference>
<dbReference type="GO" id="GO:0035264">
    <property type="term" value="P:multicellular organism growth"/>
    <property type="evidence" value="ECO:0000315"/>
    <property type="project" value="MGI"/>
</dbReference>
<dbReference type="GO" id="GO:0046716">
    <property type="term" value="P:muscle cell cellular homeostasis"/>
    <property type="evidence" value="ECO:0000315"/>
    <property type="project" value="MGI"/>
</dbReference>
<dbReference type="GO" id="GO:0030502">
    <property type="term" value="P:negative regulation of bone mineralization"/>
    <property type="evidence" value="ECO:0000315"/>
    <property type="project" value="UniProtKB"/>
</dbReference>
<dbReference type="GO" id="GO:0045599">
    <property type="term" value="P:negative regulation of fat cell differentiation"/>
    <property type="evidence" value="ECO:0000315"/>
    <property type="project" value="BHF-UCL"/>
</dbReference>
<dbReference type="GO" id="GO:1990787">
    <property type="term" value="P:negative regulation of hh target transcription factor activity"/>
    <property type="evidence" value="ECO:0000315"/>
    <property type="project" value="UniProtKB"/>
</dbReference>
<dbReference type="GO" id="GO:0030279">
    <property type="term" value="P:negative regulation of ossification"/>
    <property type="evidence" value="ECO:0000315"/>
    <property type="project" value="MGI"/>
</dbReference>
<dbReference type="GO" id="GO:0051402">
    <property type="term" value="P:neuron apoptotic process"/>
    <property type="evidence" value="ECO:0000315"/>
    <property type="project" value="MGI"/>
</dbReference>
<dbReference type="GO" id="GO:0042476">
    <property type="term" value="P:odontogenesis"/>
    <property type="evidence" value="ECO:0000315"/>
    <property type="project" value="MGI"/>
</dbReference>
<dbReference type="GO" id="GO:0097252">
    <property type="term" value="P:oligodendrocyte apoptotic process"/>
    <property type="evidence" value="ECO:0000315"/>
    <property type="project" value="MGI"/>
</dbReference>
<dbReference type="GO" id="GO:0019634">
    <property type="term" value="P:organic phosphonate metabolic process"/>
    <property type="evidence" value="ECO:0000315"/>
    <property type="project" value="MGI"/>
</dbReference>
<dbReference type="GO" id="GO:0001503">
    <property type="term" value="P:ossification"/>
    <property type="evidence" value="ECO:0000315"/>
    <property type="project" value="MGI"/>
</dbReference>
<dbReference type="GO" id="GO:0001649">
    <property type="term" value="P:osteoblast differentiation"/>
    <property type="evidence" value="ECO:0000314"/>
    <property type="project" value="MGI"/>
</dbReference>
<dbReference type="GO" id="GO:0030316">
    <property type="term" value="P:osteoclast differentiation"/>
    <property type="evidence" value="ECO:0000315"/>
    <property type="project" value="MGI"/>
</dbReference>
<dbReference type="GO" id="GO:0055062">
    <property type="term" value="P:phosphate ion homeostasis"/>
    <property type="evidence" value="ECO:0000314"/>
    <property type="project" value="MGI"/>
</dbReference>
<dbReference type="GO" id="GO:0002317">
    <property type="term" value="P:plasma cell differentiation"/>
    <property type="evidence" value="ECO:0000315"/>
    <property type="project" value="MGI"/>
</dbReference>
<dbReference type="GO" id="GO:0035128">
    <property type="term" value="P:post-embryonic forelimb morphogenesis"/>
    <property type="evidence" value="ECO:0000315"/>
    <property type="project" value="MGI"/>
</dbReference>
<dbReference type="GO" id="GO:0070212">
    <property type="term" value="P:protein poly-ADP-ribosylation"/>
    <property type="evidence" value="ECO:0000314"/>
    <property type="project" value="MGI"/>
</dbReference>
<dbReference type="GO" id="GO:0002021">
    <property type="term" value="P:response to dietary excess"/>
    <property type="evidence" value="ECO:0000315"/>
    <property type="project" value="MGI"/>
</dbReference>
<dbReference type="GO" id="GO:0140459">
    <property type="term" value="P:response to Gram-positive bacterium"/>
    <property type="evidence" value="ECO:0000315"/>
    <property type="project" value="MGI"/>
</dbReference>
<dbReference type="GO" id="GO:0032868">
    <property type="term" value="P:response to insulin"/>
    <property type="evidence" value="ECO:0000315"/>
    <property type="project" value="MGI"/>
</dbReference>
<dbReference type="GO" id="GO:0032026">
    <property type="term" value="P:response to magnesium ion"/>
    <property type="evidence" value="ECO:0000315"/>
    <property type="project" value="MGI"/>
</dbReference>
<dbReference type="GO" id="GO:0036119">
    <property type="term" value="P:response to platelet-derived growth factor"/>
    <property type="evidence" value="ECO:0000315"/>
    <property type="project" value="MGI"/>
</dbReference>
<dbReference type="GO" id="GO:1904383">
    <property type="term" value="P:response to sodium phosphate"/>
    <property type="evidence" value="ECO:0000315"/>
    <property type="project" value="MGI"/>
</dbReference>
<dbReference type="GO" id="GO:0034516">
    <property type="term" value="P:response to vitamin B6"/>
    <property type="evidence" value="ECO:0000316"/>
    <property type="project" value="MGI"/>
</dbReference>
<dbReference type="GO" id="GO:0009611">
    <property type="term" value="P:response to wounding"/>
    <property type="evidence" value="ECO:0000315"/>
    <property type="project" value="MGI"/>
</dbReference>
<dbReference type="GO" id="GO:0050954">
    <property type="term" value="P:sensory perception of mechanical stimulus"/>
    <property type="evidence" value="ECO:0000315"/>
    <property type="project" value="MGI"/>
</dbReference>
<dbReference type="GO" id="GO:0007605">
    <property type="term" value="P:sensory perception of sound"/>
    <property type="evidence" value="ECO:0000315"/>
    <property type="project" value="MGI"/>
</dbReference>
<dbReference type="GO" id="GO:0050951">
    <property type="term" value="P:sensory perception of temperature stimulus"/>
    <property type="evidence" value="ECO:0000315"/>
    <property type="project" value="MGI"/>
</dbReference>
<dbReference type="GO" id="GO:0043588">
    <property type="term" value="P:skin development"/>
    <property type="evidence" value="ECO:0000315"/>
    <property type="project" value="MGI"/>
</dbReference>
<dbReference type="GO" id="GO:0007224">
    <property type="term" value="P:smoothened signaling pathway"/>
    <property type="evidence" value="ECO:0000315"/>
    <property type="project" value="MGI"/>
</dbReference>
<dbReference type="GO" id="GO:0021510">
    <property type="term" value="P:spinal cord development"/>
    <property type="evidence" value="ECO:0000315"/>
    <property type="project" value="MGI"/>
</dbReference>
<dbReference type="GO" id="GO:0030217">
    <property type="term" value="P:T cell differentiation"/>
    <property type="evidence" value="ECO:0000315"/>
    <property type="project" value="MGI"/>
</dbReference>
<dbReference type="GO" id="GO:0034505">
    <property type="term" value="P:tooth mineralization"/>
    <property type="evidence" value="ECO:0000315"/>
    <property type="project" value="MGI"/>
</dbReference>
<dbReference type="GO" id="GO:1904738">
    <property type="term" value="P:vascular associated smooth muscle cell migration"/>
    <property type="evidence" value="ECO:0000315"/>
    <property type="project" value="MGI"/>
</dbReference>
<dbReference type="GO" id="GO:1990874">
    <property type="term" value="P:vascular associated smooth muscle cell proliferation"/>
    <property type="evidence" value="ECO:0000315"/>
    <property type="project" value="MGI"/>
</dbReference>
<dbReference type="GO" id="GO:0001570">
    <property type="term" value="P:vasculogenesis"/>
    <property type="evidence" value="ECO:0000315"/>
    <property type="project" value="MGI"/>
</dbReference>
<dbReference type="GO" id="GO:0070640">
    <property type="term" value="P:vitamin D3 metabolic process"/>
    <property type="evidence" value="ECO:0000315"/>
    <property type="project" value="MGI"/>
</dbReference>
<dbReference type="GO" id="GO:0016055">
    <property type="term" value="P:Wnt signaling pathway"/>
    <property type="evidence" value="ECO:0000315"/>
    <property type="project" value="MGI"/>
</dbReference>
<dbReference type="CDD" id="cd16018">
    <property type="entry name" value="Enpp"/>
    <property type="match status" value="1"/>
</dbReference>
<dbReference type="CDD" id="cd00091">
    <property type="entry name" value="NUC"/>
    <property type="match status" value="1"/>
</dbReference>
<dbReference type="FunFam" id="3.40.720.10:FF:000010">
    <property type="entry name" value="Ectonucleotide pyrophosphatase/phosphodiesterase family member 1"/>
    <property type="match status" value="1"/>
</dbReference>
<dbReference type="FunFam" id="4.10.410.20:FF:000003">
    <property type="entry name" value="Ectonucleotide pyrophosphatase/phosphodiesterase family member 1"/>
    <property type="match status" value="1"/>
</dbReference>
<dbReference type="FunFam" id="3.40.570.10:FF:000006">
    <property type="entry name" value="ectonucleotide pyrophosphatase/phosphodiesterase family member 1"/>
    <property type="match status" value="1"/>
</dbReference>
<dbReference type="FunFam" id="4.10.410.20:FF:000001">
    <property type="entry name" value="Ectonucleotide pyrophosphatase/phosphodiesterase family member 2"/>
    <property type="match status" value="1"/>
</dbReference>
<dbReference type="Gene3D" id="4.10.410.20">
    <property type="match status" value="2"/>
</dbReference>
<dbReference type="Gene3D" id="3.40.720.10">
    <property type="entry name" value="Alkaline Phosphatase, subunit A"/>
    <property type="match status" value="1"/>
</dbReference>
<dbReference type="Gene3D" id="3.40.570.10">
    <property type="entry name" value="Extracellular Endonuclease, subunit A"/>
    <property type="match status" value="1"/>
</dbReference>
<dbReference type="InterPro" id="IPR017850">
    <property type="entry name" value="Alkaline_phosphatase_core_sf"/>
</dbReference>
<dbReference type="InterPro" id="IPR044929">
    <property type="entry name" value="DNA/RNA_non-sp_Endonuclease_sf"/>
</dbReference>
<dbReference type="InterPro" id="IPR001604">
    <property type="entry name" value="Endo_G_ENPP1-like_dom"/>
</dbReference>
<dbReference type="InterPro" id="IPR020821">
    <property type="entry name" value="ENPP1-3/EXOG-like_nuc-like"/>
</dbReference>
<dbReference type="InterPro" id="IPR044925">
    <property type="entry name" value="His-Me_finger_sf"/>
</dbReference>
<dbReference type="InterPro" id="IPR002591">
    <property type="entry name" value="Phosphodiest/P_Trfase"/>
</dbReference>
<dbReference type="InterPro" id="IPR020436">
    <property type="entry name" value="SMB_chordata"/>
</dbReference>
<dbReference type="InterPro" id="IPR036024">
    <property type="entry name" value="Somatomedin_B-like_dom_sf"/>
</dbReference>
<dbReference type="InterPro" id="IPR001212">
    <property type="entry name" value="Somatomedin_B_dom"/>
</dbReference>
<dbReference type="PANTHER" id="PTHR10151">
    <property type="entry name" value="ECTONUCLEOTIDE PYROPHOSPHATASE/PHOSPHODIESTERASE"/>
    <property type="match status" value="1"/>
</dbReference>
<dbReference type="PANTHER" id="PTHR10151:SF77">
    <property type="entry name" value="ECTONUCLEOTIDE PYROPHOSPHATASE_PHOSPHODIESTERASE FAMILY MEMBER 1"/>
    <property type="match status" value="1"/>
</dbReference>
<dbReference type="Pfam" id="PF01223">
    <property type="entry name" value="Endonuclease_NS"/>
    <property type="match status" value="1"/>
</dbReference>
<dbReference type="Pfam" id="PF01663">
    <property type="entry name" value="Phosphodiest"/>
    <property type="match status" value="1"/>
</dbReference>
<dbReference type="Pfam" id="PF01033">
    <property type="entry name" value="Somatomedin_B"/>
    <property type="match status" value="2"/>
</dbReference>
<dbReference type="PRINTS" id="PR00022">
    <property type="entry name" value="SOMATOMEDINB"/>
</dbReference>
<dbReference type="SMART" id="SM00892">
    <property type="entry name" value="Endonuclease_NS"/>
    <property type="match status" value="1"/>
</dbReference>
<dbReference type="SMART" id="SM00477">
    <property type="entry name" value="NUC"/>
    <property type="match status" value="1"/>
</dbReference>
<dbReference type="SMART" id="SM00201">
    <property type="entry name" value="SO"/>
    <property type="match status" value="2"/>
</dbReference>
<dbReference type="SUPFAM" id="SSF53649">
    <property type="entry name" value="Alkaline phosphatase-like"/>
    <property type="match status" value="1"/>
</dbReference>
<dbReference type="SUPFAM" id="SSF54060">
    <property type="entry name" value="His-Me finger endonucleases"/>
    <property type="match status" value="1"/>
</dbReference>
<dbReference type="SUPFAM" id="SSF90188">
    <property type="entry name" value="Somatomedin B domain"/>
    <property type="match status" value="2"/>
</dbReference>
<dbReference type="PROSITE" id="PS00524">
    <property type="entry name" value="SMB_1"/>
    <property type="match status" value="2"/>
</dbReference>
<dbReference type="PROSITE" id="PS50958">
    <property type="entry name" value="SMB_2"/>
    <property type="match status" value="2"/>
</dbReference>